<gene>
    <name type="primary">Cry1</name>
</gene>
<comment type="function">
    <text evidence="4 10 12 13 16 19 20 24 25 26 28 29 31 35 36 37 38 39 40 41 42 43 44 47 48 49 50 51">Transcriptional repressor which forms a core component of the circadian clock. The circadian clock, an internal time-keeping system, regulates various physiological processes through the generation of approximately 24 hour circadian rhythms in gene expression, which are translated into rhythms in metabolism and behavior. It is derived from the Latin roots 'circa' (about) and 'diem' (day) and acts as an important regulator of a wide array of physiological functions including metabolism, sleep, body temperature, blood pressure, endocrine, immune, cardiovascular, and renal function. Consists of two major components: the central clock, residing in the suprachiasmatic nucleus (SCN) of the brain, and the peripheral clocks that are present in nearly every tissue and organ system. Both the central and peripheral clocks can be reset by environmental cues, also known as Zeitgebers (German for 'timegivers'). The predominant Zeitgeber for the central clock is light, which is sensed by retina and signals directly to the SCN. The central clock entrains the peripheral clocks through neuronal and hormonal signals, body temperature and feeding-related cues, aligning all clocks with the external light/dark cycle. Circadian rhythms allow an organism to achieve temporal homeostasis with its environment at the molecular level by regulating gene expression to create a peak of protein expression once every 24 hours to control when a particular physiological process is most active with respect to the solar day. Transcription and translation of core clock components (CLOCK, NPAS2, BMAL1, BMAL2, PER1, PER2, PER3, CRY1 and CRY2) plays a critical role in rhythm generation, whereas delays imposed by post-translational modifications (PTMs) are important for determining the period (tau) of the rhythms (tau refers to the period of a rhythm and is the length, in time, of one complete cycle). A diurnal rhythm is synchronized with the day/night cycle, while the ultradian and infradian rhythms have a period shorter and longer than 24 hours, respectively. Disruptions in the circadian rhythms contribute to the pathology of cardiovascular diseases, cancer, metabolic syndromes and aging. A transcription/translation feedback loop (TTFL) forms the core of the molecular circadian clock mechanism. Transcription factors, CLOCK or NPAS2 and BMAL1 or BMAL2, form the positive limb of the feedback loop, act in the form of a heterodimer and activate the transcription of core clock genes and clock-controlled genes (involved in key metabolic processes), harboring E-box elements (5'-CACGTG-3') within their promoters. The core clock genes: PER1/2/3 and CRY1/2 which are transcriptional repressors form the negative limb of the feedback loop and interact with the CLOCK|NPAS2-BMAL1|BMAL2 heterodimer inhibiting its activity and thereby negatively regulating their own expression. This heterodimer also activates nuclear receptors NR1D1/2 and RORA/B/G, which form a second feedback loop and which activate and repress BMAL1 transcription, respectively. CRY1 and CRY2 have redundant functions but also differential and selective contributions at least in defining the pace of the SCN circadian clock and its circadian transcriptional outputs. More potent transcriptional repressor in cerebellum and liver than CRY2, though more effective in lengthening the period of the SCN oscillator. On its side, CRY2 seems to play a critical role in tuning SCN circadian period by opposing the action of CRY1. With CRY2, is dispensable for circadian rhythm generation but necessary for the development of intercellular networks for rhythm synchrony. Capable of translocating circadian clock core proteins such as PER proteins to the nucleus. Interacts with CLOCK-BMAL1 independently of PER proteins and is found at CLOCK-BMAL1-bound sites, suggesting that CRY may act as a molecular gatekeeper to maintain CLOCK-BMAL1 in a poised and repressed state until the proper time for transcriptional activation. Represses the CLOCK-BMAL1 induced transcription of BHLHE40/DEC1, ATF4, MTA1, KLF10 and NAMPT. May repress circadian target genes expression in collaboration with HDAC1 and HDAC2 through histone deacetylation. Mediates the clock-control activation of ATR and modulates ATR-mediated DNA damage checkpoint. In liver, mediates circadian regulation of cAMP signaling and gluconeogenesis by binding to membrane-coupled G proteins and blocking glucagon-mediated increases in intracellular cAMP concentrations and CREB1 phosphorylation. Inhibits hepatic gluconeogenesis by decreasing nuclear FOXO1 levels that down-regulates gluconeogenic gene expression. Besides its role in the maintenance of the circadian clock, is also involved in the regulation of other processes. Represses glucocorticoid receptor NR3C1/GR-induced transcriptional activity by binding to glucocorticoid response elements (GREs). Plays a key role in glucose and lipid metabolism modulation, in part, through the transcriptional regulation of genes involved in these pathways, such as LEP or ACSL4. Represses PPARD and its target genes in the skeletal muscle and limits exercise capacity (PubMed:28683290). Plays an essential role in the generation of circadian rhythms in the retina (PubMed:29561690). Represses the transcriptional activity of NR1I2 (PubMed:28751364).</text>
</comment>
<comment type="cofactor">
    <cofactor evidence="38">
        <name>FAD</name>
        <dbReference type="ChEBI" id="CHEBI:57692"/>
    </cofactor>
    <text evidence="38">Binds 1 FAD per subunit. Only a minority of the protein molecules contain bound FAD. Contrary to the situation in photolyases, the FAD is bound in a shallow, surface-exposed pocket.</text>
</comment>
<comment type="cofactor">
    <cofactor evidence="1">
        <name>(6R)-5,10-methylene-5,6,7,8-tetrahydrofolate</name>
        <dbReference type="ChEBI" id="CHEBI:15636"/>
    </cofactor>
    <text evidence="1">Binds 1 5,10-methenyltetrahydrofolate (MTHF) non-covalently per subunit.</text>
</comment>
<comment type="activity regulation">
    <text evidence="30">KL001 (N-[3-(9H-carbazol-9-yl)-2-hydroxypropyl]-N-(2-furanylmethyl)-methanesulfonamide) binds to CRY1 and stabilizes it by inhibiting FBXL3- and ubiquitin-dependent degradation of CRY1 resulting in lengthening of the circadian periods. KL001-mediated CRY1 stabilization can inhibit glucagon-induced gluconeogenesis in primary hepatocytes.</text>
</comment>
<comment type="subunit">
    <text evidence="2 4 6 7 8 9 10 12 14 17 18 19 22 23 27 29 31 32 33 34 38 40 43 44 45 46 47 48 49 51 52">Component of the circadian core oscillator, which includes the CRY proteins, CLOCK or NPAS2, BMAL1 or BMAL2, CSNK1D and/or CSNK1E, TIMELESS, and the PER proteins (PubMed:11779462). Interacts directly with TIMELESS (PubMed:10428031, PubMed:23418588, PubMed:24489120). Interacts directly with PER1 and PER2; interaction with PER2 inhibits its ubiquitination and vice versa (PubMed:10428031, PubMed:11875063, PubMed:11889036, PubMed:14701732, PubMed:16478995, PubMed:20159955, PubMed:21613214, PubMed:23418588, PubMed:23746849). Interacts with PER3 (PubMed:10428031, PubMed:14701732). Interacts with FBXL21 (PubMed:18953409, PubMed:23452855, PubMed:23452856). Interacts with FBXL3 (PubMed:17462724, PubMed:23452855, PubMed:23452856, PubMed:23746849, PubMed:30500822). Interacts with PPP5C (via TPR repeats) (By similarity). Interacts with CLOCK-BMAL1 independently of PER2 and DNA (PubMed:21613214). Interacts with HDAC1, HDAC2 and SIN3B (PubMed:15226430). Interacts with nuclear receptors AR, NR1D1, NR3C1/GR, RORA and RORC; the interaction with at least NR3C1/GR is ligand dependent (PubMed:22170608, PubMed:28751364). Interacts with PRKDC (PubMed:24158435). Interacts with the G protein subunit alpha GNAS; the interaction may block GPCR-mediated regulation of cAMP concentrations (By similarity). Interacts with PRMT5 (PubMed:23133559). Interacts with EZH2 (PubMed:16717091). Interacts with MYBBP1A, DOCK7, HNRNPU, RPL7A, RPL8 and RPS3 (PubMed:19129230). Interacts with MAP1LC3B (PubMed:29937374). Interacts with CLOCK (PubMed:16717091, PubMed:19917250). Interacts with BMAL1 (PubMed:16717091, PubMed:19917250, PubMed:23746849, PubMed:26776516). Interacts weakly with HDAC3; this interaction is enhanced in the presence of FBXL3 (PubMed:26776516). Interacts with TRIM28, KCTD5 and DDB1 (PubMed:27123980). Interacts with DTL (By similarity). Interacts with DDB1-CUL4A complex (PubMed:26431207). Interacts with FOXO1 (PubMed:28790135). Interacts with PSMD2 in a KDM8-dependent manner (PubMed:30500822). Interacts with KDM8 in a FBXL3-dependent manner (PubMed:30500822). Interacts with PPARA (PubMed:28683290). Interacts with PPARG in a ligand-dependent manner (PubMed:28683290). Interacts with PPARD (via domain NR LBD) in a ligand-dependent manner (PubMed:28683290, PubMed:28751364). Interacts with NR1I2 (via domain NR LBD) in a ligand-dependent manner (PubMed:28751364). Interacts with NR1I3, VDR and HNF4A (PubMed:28751364).</text>
</comment>
<comment type="interaction">
    <interactant intactId="EBI-1266607">
        <id>P97784</id>
    </interactant>
    <interactant intactId="EBI-644534">
        <id>Q9WTL8</id>
        <label>Bmal1</label>
    </interactant>
    <organismsDiffer>false</organismsDiffer>
    <experiments>23</experiments>
</comment>
<comment type="interaction">
    <interactant intactId="EBI-1266607">
        <id>P97784</id>
    </interactant>
    <interactant intactId="EBI-644559">
        <id>Q9WTL8-2</id>
        <label>Bmal1</label>
    </interactant>
    <organismsDiffer>false</organismsDiffer>
    <experiments>4</experiments>
</comment>
<comment type="interaction">
    <interactant intactId="EBI-1266607">
        <id>P97784</id>
    </interactant>
    <interactant intactId="EBI-644568">
        <id>Q9WTL8-4</id>
        <label>Bmal1</label>
    </interactant>
    <organismsDiffer>false</organismsDiffer>
    <experiments>4</experiments>
</comment>
<comment type="interaction">
    <interactant intactId="EBI-1266607">
        <id>P97784</id>
    </interactant>
    <interactant intactId="EBI-9696862">
        <id>Q2VPD4</id>
        <label>Bmal2</label>
    </interactant>
    <organismsDiffer>false</organismsDiffer>
    <experiments>3</experiments>
</comment>
<comment type="interaction">
    <interactant intactId="EBI-1266607">
        <id>P97784</id>
    </interactant>
    <interactant intactId="EBI-79859">
        <id>O08785</id>
        <label>Clock</label>
    </interactant>
    <organismsDiffer>false</organismsDiffer>
    <experiments>10</experiments>
</comment>
<comment type="interaction">
    <interactant intactId="EBI-1266607">
        <id>P97784</id>
    </interactant>
    <interactant intactId="EBI-348179">
        <id>P67871</id>
        <label>Csnk2b</label>
    </interactant>
    <organismsDiffer>false</organismsDiffer>
    <experiments>4</experiments>
</comment>
<comment type="interaction">
    <interactant intactId="EBI-1266607">
        <id>P97784</id>
    </interactant>
    <interactant intactId="EBI-6898235">
        <id>Q8BFZ4</id>
        <label>Fbxl21</label>
    </interactant>
    <organismsDiffer>false</organismsDiffer>
    <experiments>10</experiments>
</comment>
<comment type="interaction">
    <interactant intactId="EBI-1266607">
        <id>P97784</id>
    </interactant>
    <interactant intactId="EBI-1266589">
        <id>Q8C4V4</id>
        <label>Fbxl3</label>
    </interactant>
    <organismsDiffer>false</organismsDiffer>
    <experiments>12</experiments>
</comment>
<comment type="interaction">
    <interactant intactId="EBI-1266607">
        <id>P97784</id>
    </interactant>
    <interactant intactId="EBI-15959147">
        <id>P06537-1</id>
        <label>Nr3c1</label>
    </interactant>
    <organismsDiffer>false</organismsDiffer>
    <experiments>3</experiments>
</comment>
<comment type="interaction">
    <interactant intactId="EBI-1266607">
        <id>P97784</id>
    </interactant>
    <interactant intactId="EBI-1266764">
        <id>O35973</id>
        <label>Per1</label>
    </interactant>
    <organismsDiffer>false</organismsDiffer>
    <experiments>3</experiments>
</comment>
<comment type="interaction">
    <interactant intactId="EBI-1266607">
        <id>P97784</id>
    </interactant>
    <interactant intactId="EBI-1266779">
        <id>O54943</id>
        <label>Per2</label>
    </interactant>
    <organismsDiffer>false</organismsDiffer>
    <experiments>22</experiments>
</comment>
<comment type="interaction">
    <interactant intactId="EBI-1266607">
        <id>P97784</id>
    </interactant>
    <interactant intactId="EBI-2527009">
        <id>Q8CIG8</id>
        <label>Prmt5</label>
    </interactant>
    <organismsDiffer>false</organismsDiffer>
    <experiments>2</experiments>
</comment>
<comment type="interaction">
    <interactant intactId="EBI-1266607">
        <id>P97784</id>
    </interactant>
    <interactant intactId="EBI-348169">
        <id>P67870</id>
        <label>CSNK2B</label>
    </interactant>
    <organismsDiffer>true</organismsDiffer>
    <experiments>2</experiments>
</comment>
<comment type="subcellular location">
    <subcellularLocation>
        <location evidence="6">Cytoplasm</location>
    </subcellularLocation>
    <subcellularLocation>
        <location evidence="6 19">Nucleus</location>
    </subcellularLocation>
    <text>Transloctaed to the nucleus through interaction with other clock proteins such as PER2 or BMAL1.</text>
</comment>
<comment type="tissue specificity">
    <text evidence="4 5 6 15 50 53 54">Expressed in cones, amacrine cells, and retinal ganglion cells of the retina (at protein level) (PubMed:29561690). Expressed in all tissues examined including heart, brain, spleen, lung, liver, skeletal muscle, kidney and testis. Higher levels in brain, liver and testis. In the retina, highly expressed in the ganglion cell layer (GCL) and in the inner nuclear layer (INL). Evenly distributed in central and peripheral retina. In the brain, highly expressed in the suprachiasmatic nucleus (SCN). High levels in cerebral cortical layers particularly in the pyramidial cell layer of the hippocampus, the granular cell layer of the dentate gyrus (DG) and the pyramidal cell layer of the piriform cortex (PFC).</text>
</comment>
<comment type="induction">
    <text evidence="4 5 15 22 24 26 31 53">Oscillates diurnally, rhythmic expression in the early night is critical for clock function (at protein level). In SCN, exhibits circadian rhythm expression with highest levels during the light phase at CT10. No detectable expression after 8 hours in the dark. Circadian oscillations also observed in liver, skeletal muscle and cerebellum, but not in testis.</text>
</comment>
<comment type="domain">
    <text evidence="51">The LIR motifs (LC3-interacting region) 3 and 5 are required for its interaction with MAP1LC3B and for its autophagy-mediated degradation.</text>
</comment>
<comment type="PTM">
    <text evidence="7 11 21 40">Phosphorylation on Ser-247 by MAPK is important for the inhibition of CLOCK-BMAL1-mediated transcriptional activity. Phosphorylation by CSNK1E requires interaction with PER1 or PER2. Phosphorylation at Ser-71 and Ser-280 by AMPK decreases protein stability. Phosphorylation at Ser-588 exhibits a robust circadian rhythm with a peak at CT8, increases protein stability, prevents SCF(FBXL3)-mediated degradation and is antagonized by interaction with PRKDC.</text>
</comment>
<comment type="PTM">
    <text evidence="8 17 18 33 34 45 46">Ubiquitinated by the SCF(FBXL3) and SCF(FBXL21) complexes, regulating the balance between degradation and stabilization. The SCF(FBXL3) complex is mainly nuclear and mediates ubiquitination and subsequent degradation of CRY1. In contrast, cytoplasmic SCF(FBXL21) complex-mediated ubiquitination leads to stabilize CRY1 and counteract the activity of the SCF(FBXL3) complex. The SCF(FBXL3) and SCF(FBXL21) complexes probably mediate ubiquitination at different Lys residues. Ubiquitination at Lys-11 and Lys-107 are specifically ubiquitinated by the SCF(FBXL21) complex but not by the SCF(FBXL3) complex. Ubiquitination may be inhibited by PER2. Deubiquitinated by USP7 (PubMed:27123980).</text>
</comment>
<comment type="PTM">
    <text evidence="51">Undergoes autophagy-mediated degradation in the liver in a time-dependent manner. Autophagic degradation of CRY1 (an inhibitor of gluconeogenesis) occurs during periods of reduced feeding allowing induction of gluconeogenesis and maintenance of blood glucose levels.</text>
</comment>
<comment type="disruption phenotype">
    <text evidence="25 29 35 37 42 47 50">Mice show an advanced phase shift (around 4 hours) in the expression of DBP, NR1D1 and PER1 genes in the liver. Double knockouts of CRY1 and CRY2 show slightly decrease body weight and lose the cycling rhythmicity of feeding behavior, energy expenditure and glucocorticoids expression. Glucose homeostasis is severely disrupted and animals exhibit elevated blood glucose in response to acute feeding after an overnight fast as well as severely impaired glucose clearance in a glucose tolerance test. When challenged with high-fat diet, animals rapidly gain weight and surpass that of wild-type mice, despite displaying hypophagia. They exhibit hyperinsulinemia and selective insulin resistance in the liver and muscle but show high insulin sensitivity in adipose tissue and consequent increased lipid uptake. Mice display enlarged gonadal, subcutaneous and perirenal fat deposits with adipocyte hypertrophy and increased lipied accumulation in liver. Mice show loss of circadian rhythms in photopic ERG b-wave amplitudes, visual contrast sensitivity and pupillary light responses, with reduced robustness and stability of bioluminescent rhythms (PubMed:29561690). Both single CRY1 knockout and double CRY1 and CRY2 knockout mice show increased exercise performance and increased mitochondrial reserve capacity in primary myotubes (PubMed:28683290).</text>
</comment>
<comment type="similarity">
    <text evidence="55">Belongs to the DNA photolyase class-1 family.</text>
</comment>
<keyword id="KW-0002">3D-structure</keyword>
<keyword id="KW-0090">Biological rhythms</keyword>
<keyword id="KW-0157">Chromophore</keyword>
<keyword id="KW-0963">Cytoplasm</keyword>
<keyword id="KW-0274">FAD</keyword>
<keyword id="KW-0285">Flavoprotein</keyword>
<keyword id="KW-1017">Isopeptide bond</keyword>
<keyword id="KW-0547">Nucleotide-binding</keyword>
<keyword id="KW-0539">Nucleus</keyword>
<keyword id="KW-0597">Phosphoprotein</keyword>
<keyword id="KW-0600">Photoreceptor protein</keyword>
<keyword id="KW-0675">Receptor</keyword>
<keyword id="KW-1185">Reference proteome</keyword>
<keyword id="KW-0678">Repressor</keyword>
<keyword id="KW-0716">Sensory transduction</keyword>
<keyword id="KW-0804">Transcription</keyword>
<keyword id="KW-0805">Transcription regulation</keyword>
<keyword id="KW-0832">Ubl conjugation</keyword>
<protein>
    <recommendedName>
        <fullName>Cryptochrome-1</fullName>
    </recommendedName>
</protein>
<sequence length="606" mass="68001">MGVNAVHWFRKGLRLHDNPALKECIQGADTIRCVYILDPWFAGSSNVGINRWRFLLQCLEDLDANLRKLNSRLFVIRGQPADVFPRLFKEWNITKLSIEYDSEPFGKERDAAIKKLATEAGVEVIVRISHTLYDLDKIIELNGGQPPLTYKRFQTLVSKMEPLEMPADTITSDVIGKCMTPLSDDHDEKYGVPSLEELGFDTDGLSSAVWPGGETEALTRLERHLERKAWVANFERPRMNANSLLASPTGLSPYLRFGCLSCRLFYFKLTDLYKKVKKNSSPPLSLYGQLLWREFFYTAATNNPRFDKMEGNPICVQIPWDKNPEALAKWAEGRTGFPWIDAIMTQLRQEGWIHHLARHAVACFLTRGDLWISWEEGMKVFEELLLDADWSINAGSWMWLSCSSFFQQFFHCYCPVGFGRRTDPNGDYIRRYLPVLRGFPAKYIYDPWNAPEGIQKVAKCLIGVNYPKPMVNHAEASRLNIERMKQIYQQLSRYRGLGLLASVPSNSNGNGGLMGYAPGENVPSCSSSGNGGLMGYAPGENVPSCSGGNCSQGSGILHYAHGDSQQTHSLKQGRSSAGTGLSSGKRPSQEEDAQSVGPKVQRQSSN</sequence>
<organism>
    <name type="scientific">Mus musculus</name>
    <name type="common">Mouse</name>
    <dbReference type="NCBI Taxonomy" id="10090"/>
    <lineage>
        <taxon>Eukaryota</taxon>
        <taxon>Metazoa</taxon>
        <taxon>Chordata</taxon>
        <taxon>Craniata</taxon>
        <taxon>Vertebrata</taxon>
        <taxon>Euteleostomi</taxon>
        <taxon>Mammalia</taxon>
        <taxon>Eutheria</taxon>
        <taxon>Euarchontoglires</taxon>
        <taxon>Glires</taxon>
        <taxon>Rodentia</taxon>
        <taxon>Myomorpha</taxon>
        <taxon>Muroidea</taxon>
        <taxon>Muridae</taxon>
        <taxon>Murinae</taxon>
        <taxon>Mus</taxon>
        <taxon>Mus</taxon>
    </lineage>
</organism>
<accession>P97784</accession>
<proteinExistence type="evidence at protein level"/>
<name>CRY1_MOUSE</name>
<feature type="chain" id="PRO_0000261142" description="Cryptochrome-1">
    <location>
        <begin position="1"/>
        <end position="606"/>
    </location>
</feature>
<feature type="domain" description="Photolyase/cryptochrome alpha/beta">
    <location>
        <begin position="3"/>
        <end position="132"/>
    </location>
</feature>
<feature type="region of interest" description="Required for inhibition of CLOCK-BMAL1-mediated transcription" evidence="12">
    <location>
        <begin position="371"/>
        <end position="470"/>
    </location>
</feature>
<feature type="region of interest" description="Interaction with TIMELESS" evidence="32">
    <location>
        <begin position="471"/>
        <end position="493"/>
    </location>
</feature>
<feature type="region of interest" description="Disordered" evidence="3">
    <location>
        <begin position="559"/>
        <end position="606"/>
    </location>
</feature>
<feature type="short sequence motif" description="LIR 1" evidence="57">
    <location>
        <begin position="50"/>
        <end position="54"/>
    </location>
</feature>
<feature type="short sequence motif" description="LIR 2" evidence="57">
    <location>
        <begin position="82"/>
        <end position="87"/>
    </location>
</feature>
<feature type="short sequence motif" description="LIR 3" evidence="57">
    <location>
        <begin position="151"/>
        <end position="156"/>
    </location>
</feature>
<feature type="short sequence motif" description="LIR 4" evidence="57">
    <location>
        <begin position="255"/>
        <end position="260"/>
    </location>
</feature>
<feature type="short sequence motif" description="LIR 5" evidence="57">
    <location>
        <begin position="271"/>
        <end position="276"/>
    </location>
</feature>
<feature type="short sequence motif" description="LIR 6" evidence="57">
    <location>
        <begin position="285"/>
        <end position="290"/>
    </location>
</feature>
<feature type="short sequence motif" description="LIR 7" evidence="57">
    <location>
        <begin position="335"/>
        <end position="339"/>
    </location>
</feature>
<feature type="short sequence motif" description="LIR 8" evidence="57">
    <location>
        <begin position="379"/>
        <end position="384"/>
    </location>
</feature>
<feature type="short sequence motif" description="LIR 9" evidence="57">
    <location>
        <begin position="395"/>
        <end position="400"/>
    </location>
</feature>
<feature type="short sequence motif" description="LIR 10" evidence="57">
    <location>
        <begin position="411"/>
        <end position="416"/>
    </location>
</feature>
<feature type="short sequence motif" description="LIR 11" evidence="57">
    <location>
        <begin position="430"/>
        <end position="435"/>
    </location>
</feature>
<feature type="short sequence motif" description="LIR 12" evidence="57">
    <location>
        <begin position="486"/>
        <end position="491"/>
    </location>
</feature>
<feature type="short sequence motif" description="LIR 13" evidence="57">
    <location>
        <begin position="492"/>
        <end position="497"/>
    </location>
</feature>
<feature type="compositionally biased region" description="Polar residues" evidence="3">
    <location>
        <begin position="563"/>
        <end position="586"/>
    </location>
</feature>
<feature type="binding site" evidence="38">
    <location>
        <position position="252"/>
    </location>
    <ligand>
        <name>FAD</name>
        <dbReference type="ChEBI" id="CHEBI:57692"/>
    </ligand>
</feature>
<feature type="binding site" evidence="38">
    <location>
        <position position="289"/>
    </location>
    <ligand>
        <name>FAD</name>
        <dbReference type="ChEBI" id="CHEBI:57692"/>
    </ligand>
</feature>
<feature type="binding site" evidence="38">
    <location>
        <position position="355"/>
    </location>
    <ligand>
        <name>FAD</name>
        <dbReference type="ChEBI" id="CHEBI:57692"/>
    </ligand>
</feature>
<feature type="binding site" evidence="38">
    <location>
        <begin position="387"/>
        <end position="389"/>
    </location>
    <ligand>
        <name>FAD</name>
        <dbReference type="ChEBI" id="CHEBI:57692"/>
    </ligand>
</feature>
<feature type="modified residue" description="Phosphoserine; by AMPK" evidence="21">
    <location>
        <position position="71"/>
    </location>
</feature>
<feature type="modified residue" description="Phosphoserine; by MAPK" evidence="11">
    <location>
        <position position="247"/>
    </location>
</feature>
<feature type="modified residue" description="Phosphoserine; by AMPK" evidence="21">
    <location>
        <position position="280"/>
    </location>
</feature>
<feature type="modified residue" description="Phosphoserine" evidence="40">
    <location>
        <position position="588"/>
    </location>
</feature>
<feature type="cross-link" description="Glycyl lysine isopeptide (Lys-Gly) (interchain with G-Cter in ubiquitin)" evidence="56">
    <location>
        <position position="11"/>
    </location>
</feature>
<feature type="cross-link" description="Glycyl lysine isopeptide (Lys-Gly) (interchain with G-Cter in ubiquitin)" evidence="34">
    <location>
        <position position="107"/>
    </location>
</feature>
<feature type="cross-link" description="Glycyl lysine isopeptide (Lys-Gly) (interchain with G-Cter in ubiquitin)" evidence="34">
    <location>
        <position position="159"/>
    </location>
</feature>
<feature type="cross-link" description="Glycyl lysine isopeptide (Lys-Gly) (interchain with G-Cter in ubiquitin)" evidence="34">
    <location>
        <position position="329"/>
    </location>
</feature>
<feature type="cross-link" description="Glycyl lysine isopeptide (Lys-Gly) (interchain with G-Cter in ubiquitin)" evidence="34">
    <location>
        <position position="485"/>
    </location>
</feature>
<feature type="cross-link" description="Glycyl lysine isopeptide (Lys-Gly) (interchain with G-Cter in ubiquitin)" evidence="44">
    <location>
        <position position="585"/>
    </location>
</feature>
<feature type="mutagenesis site" description="Phosphomimetic mutant that leads to stabilization of the protein; when associated with A-280." evidence="21">
    <original>S</original>
    <variation>A</variation>
    <location>
        <position position="71"/>
    </location>
</feature>
<feature type="mutagenesis site" description="Phosphomimetic mutant that leads to destabilization of the protein and abolishes ability to bind PER2; when associated with D-280." evidence="21">
    <original>S</original>
    <variation>D</variation>
    <location>
        <position position="71"/>
    </location>
</feature>
<feature type="mutagenesis site" description="Sensitive to FBXL3-ediated degradation but noz affected by expression of FBXL21." evidence="34">
    <original>K</original>
    <variation>R</variation>
    <location>
        <position position="107"/>
    </location>
</feature>
<feature type="mutagenesis site" description="Reduces affinity for FBXL3." evidence="38">
    <original>H</original>
    <variation>E</variation>
    <location>
        <position position="224"/>
    </location>
</feature>
<feature type="mutagenesis site" description="Reduced MAPK-catalyzed in vitro phosphorylation. No effect on inhibition of CLOCK-BMAL1-mediated transcriptional activity." evidence="11 38">
    <original>S</original>
    <variation>A</variation>
    <location>
        <position position="247"/>
    </location>
</feature>
<feature type="mutagenesis site" description="Reduced inhibition of CLOCK-BMAL1-mediated transcriptional activity." evidence="11 38">
    <original>S</original>
    <variation>D</variation>
    <location>
        <position position="247"/>
    </location>
</feature>
<feature type="mutagenesis site" description="Reduced interaction with MAP1LC3B and significant decrease in its autophagy-mediated degradation; when associated with A-276." evidence="51">
    <original>Y</original>
    <variation>A</variation>
    <location>
        <position position="273"/>
    </location>
</feature>
<feature type="mutagenesis site" description="Reduced interaction with MAP1LC3B and significant decrease in its autophagy-mediated degradation; when associated with A-273." evidence="51">
    <original>V</original>
    <variation>A</variation>
    <location>
        <position position="276"/>
    </location>
</feature>
<feature type="mutagenesis site" description="Phosphomimetic mutant that leads to stabilization of the protein; when associated with A-71." evidence="21">
    <original>S</original>
    <variation>A</variation>
    <location>
        <position position="280"/>
    </location>
</feature>
<feature type="mutagenesis site" description="Phosphomimetic mutant that leads to destabilization of the protein and abolishes ability to bind PER2; when associated with D-71." evidence="21">
    <original>S</original>
    <variation>D</variation>
    <location>
        <position position="280"/>
    </location>
</feature>
<feature type="mutagenesis site" description="No effect on its interaction with MAP1LC3B and moderate decrease in its autophagy-mediated degradation; when associated with A-290." evidence="51">
    <original>Y</original>
    <variation>A</variation>
    <location>
        <position position="287"/>
    </location>
</feature>
<feature type="mutagenesis site" description="No effect on its interaction with MAP1LC3B and moderate decrease in its autophagy-mediated degradation; when associated with A-287." evidence="51">
    <original>L</original>
    <variation>A</variation>
    <location>
        <position position="290"/>
    </location>
</feature>
<feature type="mutagenesis site" description="Abolishes transcriptional repression of target genes. Abolishes interaction with PER2.">
    <original>G</original>
    <variation>D</variation>
    <location>
        <position position="336"/>
    </location>
</feature>
<feature type="mutagenesis site" description="Decreases transcriptional repression of target genes. Decreases FBXL3 binding. Increases PER2 binding." evidence="38">
    <original>EE</original>
    <variation>RR</variation>
    <location>
        <begin position="382"/>
        <end position="383"/>
    </location>
</feature>
<feature type="mutagenesis site" description="Decreases affinity for FBXL3. Slightly increases affinity for PER2." evidence="38">
    <original>F</original>
    <variation>A</variation>
    <location>
        <position position="405"/>
    </location>
</feature>
<feature type="mutagenesis site" description="Strongly reduces FBXL3 binding. Reduces PER2 binding." evidence="38">
    <original>K</original>
    <variation>D</variation>
    <variation>E</variation>
    <location>
        <position position="485"/>
    </location>
</feature>
<feature type="mutagenesis site" description="No effect on its interaction with MAP1LC3B and moderate decrease in its autophagy-mediated degradation; when associated with A-491." evidence="51">
    <original>Y</original>
    <variation>A</variation>
    <location>
        <position position="488"/>
    </location>
</feature>
<feature type="mutagenesis site" description="No effect on its interaction with MAP1LC3B and moderate decrease in its autophagy-mediated degradation; when associated with A-488." evidence="51">
    <original>L</original>
    <variation>A</variation>
    <location>
        <position position="491"/>
    </location>
</feature>
<feature type="mutagenesis site" description="Loss of interaction with MAP1LC3B and significant decrease in its autophagy-mediated degradation; when associated with A-497." evidence="51">
    <original>Y</original>
    <variation>A</variation>
    <location>
        <position position="494"/>
    </location>
</feature>
<feature type="mutagenesis site" description="Loss of interaction with MAP1LC3B and significant decrease in its autophagy-mediated degradation; when associated with A-494." evidence="51">
    <original>L</original>
    <variation>A</variation>
    <location>
        <position position="497"/>
    </location>
</feature>
<feature type="mutagenesis site" description="No effect on circadian period length and protein stability." evidence="40">
    <original>S</original>
    <variation>A</variation>
    <location>
        <position position="551"/>
    </location>
</feature>
<feature type="mutagenesis site" description="No effect on circadian period length and protein stability." evidence="40">
    <original>S</original>
    <variation>D</variation>
    <location>
        <position position="551"/>
    </location>
</feature>
<feature type="mutagenesis site" description="No effect on circadian period length and protein stability." evidence="40">
    <original>S</original>
    <variation>A</variation>
    <location>
        <position position="564"/>
    </location>
</feature>
<feature type="mutagenesis site" description="No effect on circadian period length and protein stability." evidence="40">
    <original>S</original>
    <variation>D</variation>
    <location>
        <position position="564"/>
    </location>
</feature>
<feature type="mutagenesis site" description="Loss of ubiquitination. No loss of interaction with DDB1-CUL4A complex." evidence="44">
    <original>K</original>
    <variation>A</variation>
    <location>
        <position position="585"/>
    </location>
</feature>
<feature type="mutagenesis site" description="No effect on circadian period length and protein stability." evidence="40">
    <original>S</original>
    <variation>A</variation>
    <location>
        <position position="588"/>
    </location>
</feature>
<feature type="mutagenesis site" description="Lengthen circadian period. No effect on repressive activity. Increases protein stability." evidence="40">
    <original>S</original>
    <variation>D</variation>
    <location>
        <position position="588"/>
    </location>
</feature>
<feature type="strand" evidence="58">
    <location>
        <begin position="4"/>
        <end position="11"/>
    </location>
</feature>
<feature type="strand" evidence="58">
    <location>
        <begin position="14"/>
        <end position="17"/>
    </location>
</feature>
<feature type="helix" evidence="58">
    <location>
        <begin position="19"/>
        <end position="25"/>
    </location>
</feature>
<feature type="strand" evidence="58">
    <location>
        <begin position="29"/>
        <end position="37"/>
    </location>
</feature>
<feature type="helix" evidence="59">
    <location>
        <begin position="39"/>
        <end position="41"/>
    </location>
</feature>
<feature type="helix" evidence="61">
    <location>
        <begin position="42"/>
        <end position="44"/>
    </location>
</feature>
<feature type="helix" evidence="60">
    <location>
        <begin position="46"/>
        <end position="48"/>
    </location>
</feature>
<feature type="helix" evidence="58">
    <location>
        <begin position="49"/>
        <end position="67"/>
    </location>
</feature>
<feature type="turn" evidence="58">
    <location>
        <begin position="68"/>
        <end position="70"/>
    </location>
</feature>
<feature type="strand" evidence="58">
    <location>
        <begin position="73"/>
        <end position="78"/>
    </location>
</feature>
<feature type="helix" evidence="58">
    <location>
        <begin position="80"/>
        <end position="91"/>
    </location>
</feature>
<feature type="strand" evidence="58">
    <location>
        <begin position="93"/>
        <end position="99"/>
    </location>
</feature>
<feature type="helix" evidence="58">
    <location>
        <begin position="104"/>
        <end position="119"/>
    </location>
</feature>
<feature type="strand" evidence="58">
    <location>
        <begin position="123"/>
        <end position="127"/>
    </location>
</feature>
<feature type="strand" evidence="58">
    <location>
        <begin position="130"/>
        <end position="133"/>
    </location>
</feature>
<feature type="helix" evidence="58">
    <location>
        <begin position="135"/>
        <end position="141"/>
    </location>
</feature>
<feature type="helix" evidence="58">
    <location>
        <begin position="150"/>
        <end position="158"/>
    </location>
</feature>
<feature type="turn" evidence="58">
    <location>
        <begin position="174"/>
        <end position="177"/>
    </location>
</feature>
<feature type="helix" evidence="58">
    <location>
        <begin position="186"/>
        <end position="190"/>
    </location>
</feature>
<feature type="turn" evidence="58">
    <location>
        <begin position="195"/>
        <end position="199"/>
    </location>
</feature>
<feature type="helix" evidence="58">
    <location>
        <begin position="214"/>
        <end position="229"/>
    </location>
</feature>
<feature type="turn" evidence="62">
    <location>
        <begin position="231"/>
        <end position="234"/>
    </location>
</feature>
<feature type="helix" evidence="58">
    <location>
        <begin position="241"/>
        <end position="244"/>
    </location>
</feature>
<feature type="helix" evidence="58">
    <location>
        <begin position="252"/>
        <end position="256"/>
    </location>
</feature>
<feature type="helix" evidence="58">
    <location>
        <begin position="262"/>
        <end position="277"/>
    </location>
</feature>
<feature type="helix" evidence="58">
    <location>
        <begin position="284"/>
        <end position="287"/>
    </location>
</feature>
<feature type="helix" evidence="58">
    <location>
        <begin position="288"/>
        <end position="300"/>
    </location>
</feature>
<feature type="turn" evidence="58">
    <location>
        <begin position="304"/>
        <end position="307"/>
    </location>
</feature>
<feature type="helix" evidence="58">
    <location>
        <begin position="324"/>
        <end position="332"/>
    </location>
</feature>
<feature type="helix" evidence="58">
    <location>
        <begin position="338"/>
        <end position="350"/>
    </location>
</feature>
<feature type="helix" evidence="58">
    <location>
        <begin position="355"/>
        <end position="365"/>
    </location>
</feature>
<feature type="turn" evidence="58">
    <location>
        <begin position="366"/>
        <end position="370"/>
    </location>
</feature>
<feature type="helix" evidence="58">
    <location>
        <begin position="374"/>
        <end position="384"/>
    </location>
</feature>
<feature type="helix" evidence="58">
    <location>
        <begin position="390"/>
        <end position="400"/>
    </location>
</feature>
<feature type="strand" evidence="59">
    <location>
        <begin position="403"/>
        <end position="405"/>
    </location>
</feature>
<feature type="helix" evidence="58">
    <location>
        <begin position="417"/>
        <end position="422"/>
    </location>
</feature>
<feature type="helix" evidence="58">
    <location>
        <begin position="427"/>
        <end position="432"/>
    </location>
</feature>
<feature type="helix" evidence="58">
    <location>
        <begin position="434"/>
        <end position="436"/>
    </location>
</feature>
<feature type="turn" evidence="58">
    <location>
        <begin position="441"/>
        <end position="445"/>
    </location>
</feature>
<feature type="helix" evidence="58">
    <location>
        <begin position="447"/>
        <end position="449"/>
    </location>
</feature>
<feature type="helix" evidence="58">
    <location>
        <begin position="452"/>
        <end position="457"/>
    </location>
</feature>
<feature type="turn" evidence="58">
    <location>
        <begin position="462"/>
        <end position="464"/>
    </location>
</feature>
<feature type="helix" evidence="58">
    <location>
        <begin position="473"/>
        <end position="487"/>
    </location>
</feature>
<feature type="helix" evidence="61">
    <location>
        <begin position="490"/>
        <end position="494"/>
    </location>
</feature>
<evidence type="ECO:0000250" key="1"/>
<evidence type="ECO:0000250" key="2">
    <source>
        <dbReference type="UniProtKB" id="Q16526"/>
    </source>
</evidence>
<evidence type="ECO:0000256" key="3">
    <source>
        <dbReference type="SAM" id="MobiDB-lite"/>
    </source>
</evidence>
<evidence type="ECO:0000269" key="4">
    <source>
    </source>
</evidence>
<evidence type="ECO:0000269" key="5">
    <source>
    </source>
</evidence>
<evidence type="ECO:0000269" key="6">
    <source>
    </source>
</evidence>
<evidence type="ECO:0000269" key="7">
    <source>
    </source>
</evidence>
<evidence type="ECO:0000269" key="8">
    <source>
    </source>
</evidence>
<evidence type="ECO:0000269" key="9">
    <source>
    </source>
</evidence>
<evidence type="ECO:0000269" key="10">
    <source>
    </source>
</evidence>
<evidence type="ECO:0000269" key="11">
    <source>
    </source>
</evidence>
<evidence type="ECO:0000269" key="12">
    <source>
    </source>
</evidence>
<evidence type="ECO:0000269" key="13">
    <source>
    </source>
</evidence>
<evidence type="ECO:0000269" key="14">
    <source>
    </source>
</evidence>
<evidence type="ECO:0000269" key="15">
    <source>
    </source>
</evidence>
<evidence type="ECO:0000269" key="16">
    <source>
    </source>
</evidence>
<evidence type="ECO:0000269" key="17">
    <source>
    </source>
</evidence>
<evidence type="ECO:0000269" key="18">
    <source>
    </source>
</evidence>
<evidence type="ECO:0000269" key="19">
    <source>
    </source>
</evidence>
<evidence type="ECO:0000269" key="20">
    <source>
    </source>
</evidence>
<evidence type="ECO:0000269" key="21">
    <source>
    </source>
</evidence>
<evidence type="ECO:0000269" key="22">
    <source>
    </source>
</evidence>
<evidence type="ECO:0000269" key="23">
    <source>
    </source>
</evidence>
<evidence type="ECO:0000269" key="24">
    <source>
    </source>
</evidence>
<evidence type="ECO:0000269" key="25">
    <source>
    </source>
</evidence>
<evidence type="ECO:0000269" key="26">
    <source>
    </source>
</evidence>
<evidence type="ECO:0000269" key="27">
    <source>
    </source>
</evidence>
<evidence type="ECO:0000269" key="28">
    <source>
    </source>
</evidence>
<evidence type="ECO:0000269" key="29">
    <source>
    </source>
</evidence>
<evidence type="ECO:0000269" key="30">
    <source>
    </source>
</evidence>
<evidence type="ECO:0000269" key="31">
    <source>
    </source>
</evidence>
<evidence type="ECO:0000269" key="32">
    <source>
    </source>
</evidence>
<evidence type="ECO:0000269" key="33">
    <source>
    </source>
</evidence>
<evidence type="ECO:0000269" key="34">
    <source>
    </source>
</evidence>
<evidence type="ECO:0000269" key="35">
    <source>
    </source>
</evidence>
<evidence type="ECO:0000269" key="36">
    <source>
    </source>
</evidence>
<evidence type="ECO:0000269" key="37">
    <source>
    </source>
</evidence>
<evidence type="ECO:0000269" key="38">
    <source>
    </source>
</evidence>
<evidence type="ECO:0000269" key="39">
    <source>
    </source>
</evidence>
<evidence type="ECO:0000269" key="40">
    <source>
    </source>
</evidence>
<evidence type="ECO:0000269" key="41">
    <source>
    </source>
</evidence>
<evidence type="ECO:0000269" key="42">
    <source>
    </source>
</evidence>
<evidence type="ECO:0000269" key="43">
    <source>
    </source>
</evidence>
<evidence type="ECO:0000269" key="44">
    <source>
    </source>
</evidence>
<evidence type="ECO:0000269" key="45">
    <source>
    </source>
</evidence>
<evidence type="ECO:0000269" key="46">
    <source>
    </source>
</evidence>
<evidence type="ECO:0000269" key="47">
    <source>
    </source>
</evidence>
<evidence type="ECO:0000269" key="48">
    <source>
    </source>
</evidence>
<evidence type="ECO:0000269" key="49">
    <source>
    </source>
</evidence>
<evidence type="ECO:0000269" key="50">
    <source>
    </source>
</evidence>
<evidence type="ECO:0000269" key="51">
    <source>
    </source>
</evidence>
<evidence type="ECO:0000269" key="52">
    <source>
    </source>
</evidence>
<evidence type="ECO:0000269" key="53">
    <source>
    </source>
</evidence>
<evidence type="ECO:0000269" key="54">
    <source>
    </source>
</evidence>
<evidence type="ECO:0000305" key="55"/>
<evidence type="ECO:0000305" key="56">
    <source>
    </source>
</evidence>
<evidence type="ECO:0000305" key="57">
    <source>
    </source>
</evidence>
<evidence type="ECO:0007829" key="58">
    <source>
        <dbReference type="PDB" id="5T5X"/>
    </source>
</evidence>
<evidence type="ECO:0007829" key="59">
    <source>
        <dbReference type="PDB" id="6KX7"/>
    </source>
</evidence>
<evidence type="ECO:0007829" key="60">
    <source>
        <dbReference type="PDB" id="7D19"/>
    </source>
</evidence>
<evidence type="ECO:0007829" key="61">
    <source>
        <dbReference type="PDB" id="7D1C"/>
    </source>
</evidence>
<evidence type="ECO:0007829" key="62">
    <source>
        <dbReference type="PDB" id="7DLI"/>
    </source>
</evidence>
<dbReference type="EMBL" id="AB000777">
    <property type="protein sequence ID" value="BAA19175.1"/>
    <property type="molecule type" value="mRNA"/>
</dbReference>
<dbReference type="EMBL" id="AF156986">
    <property type="protein sequence ID" value="AAD39548.1"/>
    <property type="molecule type" value="mRNA"/>
</dbReference>
<dbReference type="EMBL" id="AK162460">
    <property type="protein sequence ID" value="BAE36931.1"/>
    <property type="molecule type" value="mRNA"/>
</dbReference>
<dbReference type="EMBL" id="BC022174">
    <property type="protein sequence ID" value="AAH22174.1"/>
    <property type="molecule type" value="mRNA"/>
</dbReference>
<dbReference type="EMBL" id="BC085499">
    <property type="protein sequence ID" value="AAH85499.1"/>
    <property type="molecule type" value="mRNA"/>
</dbReference>
<dbReference type="CCDS" id="CCDS24089.1"/>
<dbReference type="RefSeq" id="NP_031797.1">
    <property type="nucleotide sequence ID" value="NM_007771.4"/>
</dbReference>
<dbReference type="PDB" id="4CT0">
    <property type="method" value="X-ray"/>
    <property type="resolution" value="2.45 A"/>
    <property type="chains" value="A=1-496"/>
</dbReference>
<dbReference type="PDB" id="4K0R">
    <property type="method" value="X-ray"/>
    <property type="resolution" value="2.65 A"/>
    <property type="chains" value="A=1-606"/>
</dbReference>
<dbReference type="PDB" id="5T5X">
    <property type="method" value="X-ray"/>
    <property type="resolution" value="1.84 A"/>
    <property type="chains" value="A=1-491"/>
</dbReference>
<dbReference type="PDB" id="6KX4">
    <property type="method" value="X-ray"/>
    <property type="resolution" value="2.00 A"/>
    <property type="chains" value="A=1-496"/>
</dbReference>
<dbReference type="PDB" id="6KX5">
    <property type="method" value="X-ray"/>
    <property type="resolution" value="2.00 A"/>
    <property type="chains" value="A=1-496"/>
</dbReference>
<dbReference type="PDB" id="6KX6">
    <property type="method" value="X-ray"/>
    <property type="resolution" value="2.00 A"/>
    <property type="chains" value="A/B=1-496"/>
</dbReference>
<dbReference type="PDB" id="6KX7">
    <property type="method" value="X-ray"/>
    <property type="resolution" value="2.10 A"/>
    <property type="chains" value="A=1-496"/>
</dbReference>
<dbReference type="PDB" id="6LUE">
    <property type="method" value="X-ray"/>
    <property type="resolution" value="2.10 A"/>
    <property type="chains" value="A/B=1-496"/>
</dbReference>
<dbReference type="PDB" id="6OF7">
    <property type="method" value="X-ray"/>
    <property type="resolution" value="3.11 A"/>
    <property type="chains" value="A=1-491"/>
</dbReference>
<dbReference type="PDB" id="7D0M">
    <property type="method" value="X-ray"/>
    <property type="resolution" value="1.95 A"/>
    <property type="chains" value="A=1-496"/>
</dbReference>
<dbReference type="PDB" id="7D19">
    <property type="method" value="X-ray"/>
    <property type="resolution" value="2.35 A"/>
    <property type="chains" value="A/B=1-496"/>
</dbReference>
<dbReference type="PDB" id="7D1C">
    <property type="method" value="X-ray"/>
    <property type="resolution" value="1.91 A"/>
    <property type="chains" value="A=1-496"/>
</dbReference>
<dbReference type="PDB" id="7DLI">
    <property type="method" value="X-ray"/>
    <property type="resolution" value="2.20 A"/>
    <property type="chains" value="A/B/C=1-496"/>
</dbReference>
<dbReference type="PDB" id="7WVA">
    <property type="method" value="X-ray"/>
    <property type="resolution" value="2.05 A"/>
    <property type="chains" value="A=1-496"/>
</dbReference>
<dbReference type="PDBsum" id="4CT0"/>
<dbReference type="PDBsum" id="4K0R"/>
<dbReference type="PDBsum" id="5T5X"/>
<dbReference type="PDBsum" id="6KX4"/>
<dbReference type="PDBsum" id="6KX5"/>
<dbReference type="PDBsum" id="6KX6"/>
<dbReference type="PDBsum" id="6KX7"/>
<dbReference type="PDBsum" id="6LUE"/>
<dbReference type="PDBsum" id="6OF7"/>
<dbReference type="PDBsum" id="7D0M"/>
<dbReference type="PDBsum" id="7D19"/>
<dbReference type="PDBsum" id="7D1C"/>
<dbReference type="PDBsum" id="7DLI"/>
<dbReference type="PDBsum" id="7WVA"/>
<dbReference type="SMR" id="P97784"/>
<dbReference type="BioGRID" id="198906">
    <property type="interactions" value="35"/>
</dbReference>
<dbReference type="ComplexPortal" id="CPX-3209">
    <property type="entry name" value="Cry1-Per2 complex"/>
</dbReference>
<dbReference type="ComplexPortal" id="CPX-3216">
    <property type="entry name" value="Cry1-Per1 complex"/>
</dbReference>
<dbReference type="ComplexPortal" id="CPX-3217">
    <property type="entry name" value="Cry1-Per3 complex"/>
</dbReference>
<dbReference type="CORUM" id="P97784"/>
<dbReference type="DIP" id="DIP-38515N"/>
<dbReference type="FunCoup" id="P97784">
    <property type="interactions" value="3210"/>
</dbReference>
<dbReference type="IntAct" id="P97784">
    <property type="interactions" value="49"/>
</dbReference>
<dbReference type="MINT" id="P97784"/>
<dbReference type="STRING" id="10090.ENSMUSP00000020227"/>
<dbReference type="iPTMnet" id="P97784"/>
<dbReference type="PhosphoSitePlus" id="P97784"/>
<dbReference type="PaxDb" id="10090-ENSMUSP00000020227"/>
<dbReference type="PeptideAtlas" id="P97784"/>
<dbReference type="ProteomicsDB" id="284026"/>
<dbReference type="Pumba" id="P97784"/>
<dbReference type="Antibodypedia" id="3122">
    <property type="antibodies" value="288 antibodies from 35 providers"/>
</dbReference>
<dbReference type="DNASU" id="12952"/>
<dbReference type="Ensembl" id="ENSMUST00000020227.11">
    <property type="protein sequence ID" value="ENSMUSP00000020227.10"/>
    <property type="gene ID" value="ENSMUSG00000020038.11"/>
</dbReference>
<dbReference type="GeneID" id="12952"/>
<dbReference type="KEGG" id="mmu:12952"/>
<dbReference type="UCSC" id="uc007gle.1">
    <property type="organism name" value="mouse"/>
</dbReference>
<dbReference type="AGR" id="MGI:1270841"/>
<dbReference type="CTD" id="1407"/>
<dbReference type="MGI" id="MGI:1270841">
    <property type="gene designation" value="Cry1"/>
</dbReference>
<dbReference type="VEuPathDB" id="HostDB:ENSMUSG00000020038"/>
<dbReference type="eggNOG" id="KOG0133">
    <property type="taxonomic scope" value="Eukaryota"/>
</dbReference>
<dbReference type="GeneTree" id="ENSGT00940000155455"/>
<dbReference type="HOGENOM" id="CLU_010348_3_4_1"/>
<dbReference type="InParanoid" id="P97784"/>
<dbReference type="OMA" id="YTVFTPY"/>
<dbReference type="OrthoDB" id="435881at2759"/>
<dbReference type="PhylomeDB" id="P97784"/>
<dbReference type="TreeFam" id="TF323191"/>
<dbReference type="BioGRID-ORCS" id="12952">
    <property type="hits" value="2 hits in 78 CRISPR screens"/>
</dbReference>
<dbReference type="ChiTaRS" id="Cry1">
    <property type="organism name" value="mouse"/>
</dbReference>
<dbReference type="EvolutionaryTrace" id="P97784"/>
<dbReference type="PRO" id="PR:P97784"/>
<dbReference type="Proteomes" id="UP000000589">
    <property type="component" value="Chromosome 10"/>
</dbReference>
<dbReference type="RNAct" id="P97784">
    <property type="molecule type" value="protein"/>
</dbReference>
<dbReference type="Bgee" id="ENSMUSG00000020038">
    <property type="expression patterns" value="Expressed in secondary oocyte and 270 other cell types or tissues"/>
</dbReference>
<dbReference type="ExpressionAtlas" id="P97784">
    <property type="expression patterns" value="baseline and differential"/>
</dbReference>
<dbReference type="GO" id="GO:0005829">
    <property type="term" value="C:cytosol"/>
    <property type="evidence" value="ECO:0000304"/>
    <property type="project" value="Reactome"/>
</dbReference>
<dbReference type="GO" id="GO:0005739">
    <property type="term" value="C:mitochondrion"/>
    <property type="evidence" value="ECO:0000314"/>
    <property type="project" value="UniProtKB"/>
</dbReference>
<dbReference type="GO" id="GO:0005654">
    <property type="term" value="C:nucleoplasm"/>
    <property type="evidence" value="ECO:0000304"/>
    <property type="project" value="Reactome"/>
</dbReference>
<dbReference type="GO" id="GO:0005634">
    <property type="term" value="C:nucleus"/>
    <property type="evidence" value="ECO:0000314"/>
    <property type="project" value="UniProtKB"/>
</dbReference>
<dbReference type="GO" id="GO:0140297">
    <property type="term" value="F:DNA-binding transcription factor binding"/>
    <property type="evidence" value="ECO:0000353"/>
    <property type="project" value="UniProtKB"/>
</dbReference>
<dbReference type="GO" id="GO:0003690">
    <property type="term" value="F:double-stranded DNA binding"/>
    <property type="evidence" value="ECO:0000314"/>
    <property type="project" value="UniProtKB"/>
</dbReference>
<dbReference type="GO" id="GO:0070888">
    <property type="term" value="F:E-box binding"/>
    <property type="evidence" value="ECO:0000314"/>
    <property type="project" value="UniProtKB"/>
</dbReference>
<dbReference type="GO" id="GO:0042826">
    <property type="term" value="F:histone deacetylase binding"/>
    <property type="evidence" value="ECO:0000353"/>
    <property type="project" value="UniProtKB"/>
</dbReference>
<dbReference type="GO" id="GO:0019900">
    <property type="term" value="F:kinase binding"/>
    <property type="evidence" value="ECO:0000353"/>
    <property type="project" value="UniProtKB"/>
</dbReference>
<dbReference type="GO" id="GO:0016922">
    <property type="term" value="F:nuclear receptor binding"/>
    <property type="evidence" value="ECO:0000353"/>
    <property type="project" value="UniProtKB"/>
</dbReference>
<dbReference type="GO" id="GO:0000166">
    <property type="term" value="F:nucleotide binding"/>
    <property type="evidence" value="ECO:0007669"/>
    <property type="project" value="UniProtKB-KW"/>
</dbReference>
<dbReference type="GO" id="GO:0019902">
    <property type="term" value="F:phosphatase binding"/>
    <property type="evidence" value="ECO:0007669"/>
    <property type="project" value="Ensembl"/>
</dbReference>
<dbReference type="GO" id="GO:0009881">
    <property type="term" value="F:photoreceptor activity"/>
    <property type="evidence" value="ECO:0007669"/>
    <property type="project" value="UniProtKB-KW"/>
</dbReference>
<dbReference type="GO" id="GO:0019901">
    <property type="term" value="F:protein kinase binding"/>
    <property type="evidence" value="ECO:0000353"/>
    <property type="project" value="UniProtKB"/>
</dbReference>
<dbReference type="GO" id="GO:0032922">
    <property type="term" value="P:circadian regulation of gene expression"/>
    <property type="evidence" value="ECO:0000315"/>
    <property type="project" value="UniProtKB"/>
</dbReference>
<dbReference type="GO" id="GO:0007623">
    <property type="term" value="P:circadian rhythm"/>
    <property type="evidence" value="ECO:0000314"/>
    <property type="project" value="MGI"/>
</dbReference>
<dbReference type="GO" id="GO:0043153">
    <property type="term" value="P:entrainment of circadian clock by photoperiod"/>
    <property type="evidence" value="ECO:0000315"/>
    <property type="project" value="UniProtKB"/>
</dbReference>
<dbReference type="GO" id="GO:0006094">
    <property type="term" value="P:gluconeogenesis"/>
    <property type="evidence" value="ECO:0000315"/>
    <property type="project" value="UniProtKB"/>
</dbReference>
<dbReference type="GO" id="GO:0042593">
    <property type="term" value="P:glucose homeostasis"/>
    <property type="evidence" value="ECO:0000316"/>
    <property type="project" value="UniProtKB"/>
</dbReference>
<dbReference type="GO" id="GO:0019915">
    <property type="term" value="P:lipid storage"/>
    <property type="evidence" value="ECO:0000316"/>
    <property type="project" value="UniProtKB"/>
</dbReference>
<dbReference type="GO" id="GO:0042754">
    <property type="term" value="P:negative regulation of circadian rhythm"/>
    <property type="evidence" value="ECO:0000314"/>
    <property type="project" value="UniProtKB"/>
</dbReference>
<dbReference type="GO" id="GO:0045892">
    <property type="term" value="P:negative regulation of DNA-templated transcription"/>
    <property type="evidence" value="ECO:0000314"/>
    <property type="project" value="UniProtKB"/>
</dbReference>
<dbReference type="GO" id="GO:0045744">
    <property type="term" value="P:negative regulation of G protein-coupled receptor signaling pathway"/>
    <property type="evidence" value="ECO:0000315"/>
    <property type="project" value="UniProtKB"/>
</dbReference>
<dbReference type="GO" id="GO:2000850">
    <property type="term" value="P:negative regulation of glucocorticoid secretion"/>
    <property type="evidence" value="ECO:0000316"/>
    <property type="project" value="UniProtKB"/>
</dbReference>
<dbReference type="GO" id="GO:0045721">
    <property type="term" value="P:negative regulation of gluconeogenesis"/>
    <property type="evidence" value="ECO:0000315"/>
    <property type="project" value="UniProtKB"/>
</dbReference>
<dbReference type="GO" id="GO:2000323">
    <property type="term" value="P:negative regulation of nuclear receptor-mediated glucocorticoid signaling pathway"/>
    <property type="evidence" value="ECO:0000314"/>
    <property type="project" value="UniProtKB"/>
</dbReference>
<dbReference type="GO" id="GO:0031397">
    <property type="term" value="P:negative regulation of protein ubiquitination"/>
    <property type="evidence" value="ECO:0000314"/>
    <property type="project" value="UniProtKB"/>
</dbReference>
<dbReference type="GO" id="GO:0000122">
    <property type="term" value="P:negative regulation of transcription by RNA polymerase II"/>
    <property type="evidence" value="ECO:0000315"/>
    <property type="project" value="UniProtKB"/>
</dbReference>
<dbReference type="GO" id="GO:0045722">
    <property type="term" value="P:positive regulation of gluconeogenesis"/>
    <property type="evidence" value="ECO:0000314"/>
    <property type="project" value="DisProt"/>
</dbReference>
<dbReference type="GO" id="GO:0031398">
    <property type="term" value="P:positive regulation of protein ubiquitination"/>
    <property type="evidence" value="ECO:0000315"/>
    <property type="project" value="UniProtKB"/>
</dbReference>
<dbReference type="GO" id="GO:0042752">
    <property type="term" value="P:regulation of circadian rhythm"/>
    <property type="evidence" value="ECO:0000315"/>
    <property type="project" value="UniProtKB"/>
</dbReference>
<dbReference type="GO" id="GO:2000001">
    <property type="term" value="P:regulation of DNA damage checkpoint"/>
    <property type="evidence" value="ECO:0000314"/>
    <property type="project" value="UniProtKB"/>
</dbReference>
<dbReference type="GO" id="GO:0006111">
    <property type="term" value="P:regulation of gluconeogenesis"/>
    <property type="evidence" value="ECO:0000315"/>
    <property type="project" value="DisProt"/>
</dbReference>
<dbReference type="GO" id="GO:0014823">
    <property type="term" value="P:response to activity"/>
    <property type="evidence" value="ECO:0000315"/>
    <property type="project" value="UniProtKB"/>
</dbReference>
<dbReference type="GO" id="GO:0033762">
    <property type="term" value="P:response to glucagon"/>
    <property type="evidence" value="ECO:0000315"/>
    <property type="project" value="UniProtKB"/>
</dbReference>
<dbReference type="GO" id="GO:0032868">
    <property type="term" value="P:response to insulin"/>
    <property type="evidence" value="ECO:0000316"/>
    <property type="project" value="UniProtKB"/>
</dbReference>
<dbReference type="GO" id="GO:0009416">
    <property type="term" value="P:response to light stimulus"/>
    <property type="evidence" value="ECO:0000315"/>
    <property type="project" value="UniProtKB"/>
</dbReference>
<dbReference type="GO" id="GO:0042770">
    <property type="term" value="P:signal transduction in response to DNA damage"/>
    <property type="evidence" value="ECO:0000314"/>
    <property type="project" value="UniProtKB"/>
</dbReference>
<dbReference type="DisProt" id="DP03007"/>
<dbReference type="FunFam" id="1.10.579.10:FF:000001">
    <property type="entry name" value="Cryptochrome 1"/>
    <property type="match status" value="1"/>
</dbReference>
<dbReference type="FunFam" id="1.25.40.80:FF:000002">
    <property type="entry name" value="cryptochrome-1 isoform X1"/>
    <property type="match status" value="1"/>
</dbReference>
<dbReference type="FunFam" id="1.25.40.80:FF:000003">
    <property type="entry name" value="cryptochrome-1 isoform X1"/>
    <property type="match status" value="1"/>
</dbReference>
<dbReference type="FunFam" id="3.40.50.620:FF:000099">
    <property type="entry name" value="cryptochrome-1 isoform X1"/>
    <property type="match status" value="1"/>
</dbReference>
<dbReference type="Gene3D" id="1.25.40.80">
    <property type="match status" value="2"/>
</dbReference>
<dbReference type="Gene3D" id="1.10.579.10">
    <property type="entry name" value="DNA Cyclobutane Dipyrimidine Photolyase, subunit A, domain 3"/>
    <property type="match status" value="1"/>
</dbReference>
<dbReference type="Gene3D" id="3.40.50.620">
    <property type="entry name" value="HUPs"/>
    <property type="match status" value="1"/>
</dbReference>
<dbReference type="IDEAL" id="IID50287"/>
<dbReference type="InterPro" id="IPR036134">
    <property type="entry name" value="Crypto/Photolyase_FAD-like_sf"/>
</dbReference>
<dbReference type="InterPro" id="IPR036155">
    <property type="entry name" value="Crypto/Photolyase_N_sf"/>
</dbReference>
<dbReference type="InterPro" id="IPR005101">
    <property type="entry name" value="Cryptochr/Photolyase_FAD-bd"/>
</dbReference>
<dbReference type="InterPro" id="IPR002081">
    <property type="entry name" value="Cryptochrome/DNA_photolyase_1"/>
</dbReference>
<dbReference type="InterPro" id="IPR006050">
    <property type="entry name" value="DNA_photolyase_N"/>
</dbReference>
<dbReference type="InterPro" id="IPR014729">
    <property type="entry name" value="Rossmann-like_a/b/a_fold"/>
</dbReference>
<dbReference type="PANTHER" id="PTHR11455">
    <property type="entry name" value="CRYPTOCHROME"/>
    <property type="match status" value="1"/>
</dbReference>
<dbReference type="PANTHER" id="PTHR11455:SF16">
    <property type="entry name" value="CRYPTOCHROME-1"/>
    <property type="match status" value="1"/>
</dbReference>
<dbReference type="Pfam" id="PF00875">
    <property type="entry name" value="DNA_photolyase"/>
    <property type="match status" value="1"/>
</dbReference>
<dbReference type="Pfam" id="PF03441">
    <property type="entry name" value="FAD_binding_7"/>
    <property type="match status" value="1"/>
</dbReference>
<dbReference type="SUPFAM" id="SSF48173">
    <property type="entry name" value="Cryptochrome/photolyase FAD-binding domain"/>
    <property type="match status" value="1"/>
</dbReference>
<dbReference type="SUPFAM" id="SSF52425">
    <property type="entry name" value="Cryptochrome/photolyase, N-terminal domain"/>
    <property type="match status" value="1"/>
</dbReference>
<dbReference type="PROSITE" id="PS51645">
    <property type="entry name" value="PHR_CRY_ALPHA_BETA"/>
    <property type="match status" value="1"/>
</dbReference>
<reference key="1">
    <citation type="journal article" date="1998" name="Nucleic Acids Res.">
        <title>Characterization of photolyase/blue-light receptor homologs in mouse and human cells.</title>
        <authorList>
            <person name="Kobayashi K."/>
            <person name="Kanno S."/>
            <person name="Smit B."/>
            <person name="van der Horst G.T.J."/>
            <person name="Takao M."/>
            <person name="Yasui A."/>
        </authorList>
    </citation>
    <scope>NUCLEOTIDE SEQUENCE [MRNA]</scope>
    <scope>SUBCELLULAR LOCATION</scope>
    <scope>TISSUE SPECIFICITY</scope>
    <source>
        <tissue>Brain</tissue>
        <tissue>Keratinocyte</tissue>
        <tissue>Liver</tissue>
    </source>
</reference>
<reference key="2">
    <citation type="submission" date="1999-06" db="EMBL/GenBank/DDBJ databases">
        <title>Analysis of mouse cryptochromes.</title>
        <authorList>
            <person name="Kume K."/>
            <person name="Reppert S.M."/>
        </authorList>
    </citation>
    <scope>NUCLEOTIDE SEQUENCE [MRNA]</scope>
    <source>
        <strain>C57BL/6J</strain>
    </source>
</reference>
<reference key="3">
    <citation type="journal article" date="2005" name="Science">
        <title>The transcriptional landscape of the mammalian genome.</title>
        <authorList>
            <person name="Carninci P."/>
            <person name="Kasukawa T."/>
            <person name="Katayama S."/>
            <person name="Gough J."/>
            <person name="Frith M.C."/>
            <person name="Maeda N."/>
            <person name="Oyama R."/>
            <person name="Ravasi T."/>
            <person name="Lenhard B."/>
            <person name="Wells C."/>
            <person name="Kodzius R."/>
            <person name="Shimokawa K."/>
            <person name="Bajic V.B."/>
            <person name="Brenner S.E."/>
            <person name="Batalov S."/>
            <person name="Forrest A.R."/>
            <person name="Zavolan M."/>
            <person name="Davis M.J."/>
            <person name="Wilming L.G."/>
            <person name="Aidinis V."/>
            <person name="Allen J.E."/>
            <person name="Ambesi-Impiombato A."/>
            <person name="Apweiler R."/>
            <person name="Aturaliya R.N."/>
            <person name="Bailey T.L."/>
            <person name="Bansal M."/>
            <person name="Baxter L."/>
            <person name="Beisel K.W."/>
            <person name="Bersano T."/>
            <person name="Bono H."/>
            <person name="Chalk A.M."/>
            <person name="Chiu K.P."/>
            <person name="Choudhary V."/>
            <person name="Christoffels A."/>
            <person name="Clutterbuck D.R."/>
            <person name="Crowe M.L."/>
            <person name="Dalla E."/>
            <person name="Dalrymple B.P."/>
            <person name="de Bono B."/>
            <person name="Della Gatta G."/>
            <person name="di Bernardo D."/>
            <person name="Down T."/>
            <person name="Engstrom P."/>
            <person name="Fagiolini M."/>
            <person name="Faulkner G."/>
            <person name="Fletcher C.F."/>
            <person name="Fukushima T."/>
            <person name="Furuno M."/>
            <person name="Futaki S."/>
            <person name="Gariboldi M."/>
            <person name="Georgii-Hemming P."/>
            <person name="Gingeras T.R."/>
            <person name="Gojobori T."/>
            <person name="Green R.E."/>
            <person name="Gustincich S."/>
            <person name="Harbers M."/>
            <person name="Hayashi Y."/>
            <person name="Hensch T.K."/>
            <person name="Hirokawa N."/>
            <person name="Hill D."/>
            <person name="Huminiecki L."/>
            <person name="Iacono M."/>
            <person name="Ikeo K."/>
            <person name="Iwama A."/>
            <person name="Ishikawa T."/>
            <person name="Jakt M."/>
            <person name="Kanapin A."/>
            <person name="Katoh M."/>
            <person name="Kawasawa Y."/>
            <person name="Kelso J."/>
            <person name="Kitamura H."/>
            <person name="Kitano H."/>
            <person name="Kollias G."/>
            <person name="Krishnan S.P."/>
            <person name="Kruger A."/>
            <person name="Kummerfeld S.K."/>
            <person name="Kurochkin I.V."/>
            <person name="Lareau L.F."/>
            <person name="Lazarevic D."/>
            <person name="Lipovich L."/>
            <person name="Liu J."/>
            <person name="Liuni S."/>
            <person name="McWilliam S."/>
            <person name="Madan Babu M."/>
            <person name="Madera M."/>
            <person name="Marchionni L."/>
            <person name="Matsuda H."/>
            <person name="Matsuzawa S."/>
            <person name="Miki H."/>
            <person name="Mignone F."/>
            <person name="Miyake S."/>
            <person name="Morris K."/>
            <person name="Mottagui-Tabar S."/>
            <person name="Mulder N."/>
            <person name="Nakano N."/>
            <person name="Nakauchi H."/>
            <person name="Ng P."/>
            <person name="Nilsson R."/>
            <person name="Nishiguchi S."/>
            <person name="Nishikawa S."/>
            <person name="Nori F."/>
            <person name="Ohara O."/>
            <person name="Okazaki Y."/>
            <person name="Orlando V."/>
            <person name="Pang K.C."/>
            <person name="Pavan W.J."/>
            <person name="Pavesi G."/>
            <person name="Pesole G."/>
            <person name="Petrovsky N."/>
            <person name="Piazza S."/>
            <person name="Reed J."/>
            <person name="Reid J.F."/>
            <person name="Ring B.Z."/>
            <person name="Ringwald M."/>
            <person name="Rost B."/>
            <person name="Ruan Y."/>
            <person name="Salzberg S.L."/>
            <person name="Sandelin A."/>
            <person name="Schneider C."/>
            <person name="Schoenbach C."/>
            <person name="Sekiguchi K."/>
            <person name="Semple C.A."/>
            <person name="Seno S."/>
            <person name="Sessa L."/>
            <person name="Sheng Y."/>
            <person name="Shibata Y."/>
            <person name="Shimada H."/>
            <person name="Shimada K."/>
            <person name="Silva D."/>
            <person name="Sinclair B."/>
            <person name="Sperling S."/>
            <person name="Stupka E."/>
            <person name="Sugiura K."/>
            <person name="Sultana R."/>
            <person name="Takenaka Y."/>
            <person name="Taki K."/>
            <person name="Tammoja K."/>
            <person name="Tan S.L."/>
            <person name="Tang S."/>
            <person name="Taylor M.S."/>
            <person name="Tegner J."/>
            <person name="Teichmann S.A."/>
            <person name="Ueda H.R."/>
            <person name="van Nimwegen E."/>
            <person name="Verardo R."/>
            <person name="Wei C.L."/>
            <person name="Yagi K."/>
            <person name="Yamanishi H."/>
            <person name="Zabarovsky E."/>
            <person name="Zhu S."/>
            <person name="Zimmer A."/>
            <person name="Hide W."/>
            <person name="Bult C."/>
            <person name="Grimmond S.M."/>
            <person name="Teasdale R.D."/>
            <person name="Liu E.T."/>
            <person name="Brusic V."/>
            <person name="Quackenbush J."/>
            <person name="Wahlestedt C."/>
            <person name="Mattick J.S."/>
            <person name="Hume D.A."/>
            <person name="Kai C."/>
            <person name="Sasaki D."/>
            <person name="Tomaru Y."/>
            <person name="Fukuda S."/>
            <person name="Kanamori-Katayama M."/>
            <person name="Suzuki M."/>
            <person name="Aoki J."/>
            <person name="Arakawa T."/>
            <person name="Iida J."/>
            <person name="Imamura K."/>
            <person name="Itoh M."/>
            <person name="Kato T."/>
            <person name="Kawaji H."/>
            <person name="Kawagashira N."/>
            <person name="Kawashima T."/>
            <person name="Kojima M."/>
            <person name="Kondo S."/>
            <person name="Konno H."/>
            <person name="Nakano K."/>
            <person name="Ninomiya N."/>
            <person name="Nishio T."/>
            <person name="Okada M."/>
            <person name="Plessy C."/>
            <person name="Shibata K."/>
            <person name="Shiraki T."/>
            <person name="Suzuki S."/>
            <person name="Tagami M."/>
            <person name="Waki K."/>
            <person name="Watahiki A."/>
            <person name="Okamura-Oho Y."/>
            <person name="Suzuki H."/>
            <person name="Kawai J."/>
            <person name="Hayashizaki Y."/>
        </authorList>
    </citation>
    <scope>NUCLEOTIDE SEQUENCE [LARGE SCALE MRNA]</scope>
    <source>
        <strain>C57BL/6J</strain>
        <tissue>Embryo</tissue>
    </source>
</reference>
<reference key="4">
    <citation type="journal article" date="2004" name="Genome Res.">
        <title>The status, quality, and expansion of the NIH full-length cDNA project: the Mammalian Gene Collection (MGC).</title>
        <authorList>
            <consortium name="The MGC Project Team"/>
        </authorList>
    </citation>
    <scope>NUCLEOTIDE SEQUENCE [LARGE SCALE MRNA]</scope>
    <source>
        <strain>C57BL/6J</strain>
        <strain>FVB/N</strain>
        <tissue>Brain</tissue>
        <tissue>Embryonic brain</tissue>
        <tissue>Mammary tumor</tissue>
    </source>
</reference>
<reference key="5">
    <citation type="journal article" date="1998" name="Proc. Natl. Acad. Sci. U.S.A.">
        <title>Vitamin B2-based blue-light photoreceptors in the retinohypothalamic tract as the photoactive pigments for setting the circadian clock in mammals.</title>
        <authorList>
            <person name="Miyamoto Y."/>
            <person name="Sancar A."/>
        </authorList>
    </citation>
    <scope>TISSUE SPECIFICITY</scope>
    <scope>INDUCTION</scope>
</reference>
<reference key="6">
    <citation type="journal article" date="1999" name="Cell">
        <title>mCRY1 and mCRY2 are essential components of the negative limb of the circadian clock feedback loop.</title>
        <authorList>
            <person name="Kume K."/>
            <person name="Zylka M.J."/>
            <person name="Sriram S."/>
            <person name="Shearman L.P."/>
            <person name="Weaver D.R."/>
            <person name="Jin X."/>
            <person name="Maywood E.S."/>
            <person name="Hastings M.H."/>
            <person name="Reppert S.M."/>
        </authorList>
    </citation>
    <scope>FUNCTION</scope>
    <scope>INTERACTION WITH PER1; PER2; PER3 AND TIMELESS</scope>
    <scope>SUBCELLULAR LOCATION</scope>
    <scope>TISSUE SPECIFICITY</scope>
    <scope>INDUCTION</scope>
</reference>
<reference key="7">
    <citation type="journal article" date="1999" name="Brain Res. Mol. Brain Res.">
        <title>Circadian regulation of cryptochrome genes in the mouse.</title>
        <authorList>
            <person name="Miyamoto Y."/>
            <person name="Sancar A."/>
        </authorList>
    </citation>
    <scope>TISSUE SPECIFICITY</scope>
    <scope>INDUCTION</scope>
</reference>
<reference key="8">
    <citation type="journal article" date="2001" name="Cell">
        <title>Posttranslational mechanisms regulate the mammalian circadian clock.</title>
        <authorList>
            <person name="Lee C."/>
            <person name="Etchegaray J.-P."/>
            <person name="Cagampang F.R.A."/>
            <person name="Loudon A.S.I."/>
            <person name="Reppert S.M."/>
        </authorList>
    </citation>
    <scope>IDENTIFICATION IN A COMPLEX WITH CLOCK; PER1; PER2; CRY1; CRY2; CSNK1D AND CSNK1E</scope>
    <scope>SUBCELLULAR LOCATION</scope>
    <scope>TISSUE SPECIFICITY</scope>
</reference>
<reference key="9">
    <citation type="journal article" date="2002" name="EMBO J.">
        <title>Nucleocytoplasmic shuttling and mCRY-dependent inhibition of ubiquitylation of the mPER2 clock protein.</title>
        <authorList>
            <person name="Yagita K."/>
            <person name="Tamanini F."/>
            <person name="Yasuda M."/>
            <person name="Hoeijmakers J.H."/>
            <person name="van der Horst G.T."/>
            <person name="Okamura H."/>
        </authorList>
    </citation>
    <scope>INTERACTION WITH PER2</scope>
    <scope>SUBCELLULAR LOCATION</scope>
    <scope>UBIQUITINATION</scope>
</reference>
<reference key="10">
    <citation type="journal article" date="2002" name="J. Biol. Chem.">
        <title>The circadian regulatory proteins BMAL1 and cryptochromes are substrates of casein kinase Iepsilon.</title>
        <authorList>
            <person name="Eide E.J."/>
            <person name="Vielhaber E.L."/>
            <person name="Hinz W.A."/>
            <person name="Virshup D.M."/>
        </authorList>
    </citation>
    <scope>INTERACTION WITH PER1 AND PER2</scope>
    <scope>PHOSPHORYLATION</scope>
    <scope>SUBCELLULAR LOCATION</scope>
</reference>
<reference key="11">
    <citation type="journal article" date="2004" name="Genes Cells">
        <title>Serine phosphorylation of mCRY1 and mCRY2 by mitogen-activated protein kinase.</title>
        <authorList>
            <person name="Sanada K."/>
            <person name="Harada Y."/>
            <person name="Sakai M."/>
            <person name="Todo T."/>
            <person name="Fukada Y."/>
        </authorList>
    </citation>
    <scope>PHOSPHORYLATION AT SER-247</scope>
    <scope>MUTAGENESIS OF SER-247</scope>
</reference>
<reference key="12">
    <citation type="journal article" date="2004" name="Mol. Cell. Biol.">
        <title>Direct association between mouse PERIOD and CKIepsilon is critical for a functioning circadian clock.</title>
        <authorList>
            <person name="Lee C."/>
            <person name="Weaver D.R."/>
            <person name="Reppert S.M."/>
        </authorList>
    </citation>
    <scope>INTERACTION WITH PER1; PER2 AND PER3</scope>
</reference>
<reference key="13">
    <citation type="journal article" date="2004" name="Mol. Cell. Biol.">
        <title>Circadian and light-induced transcription of clock gene Per1 depends on histone acetylation and deacetylation.</title>
        <authorList>
            <person name="Naruse Y."/>
            <person name="Oh-hashi K."/>
            <person name="Iijima N."/>
            <person name="Naruse M."/>
            <person name="Yoshioka H."/>
            <person name="Tanaka M."/>
        </authorList>
    </citation>
    <scope>FUNCTION AS TRANSCRIPTION REPRESSOR</scope>
    <scope>INTERACTION WITH HDAC1; HDAC2 AND SIN3B</scope>
</reference>
<reference key="14">
    <citation type="journal article" date="2006" name="Cell Cycle">
        <title>Post-translational regulation of circadian transcriptional CLOCK(NPAS2)/BMAL1 complex by CRYPTOCHROMES.</title>
        <authorList>
            <person name="Kondratov R.V."/>
            <person name="Kondratova A.A."/>
            <person name="Lee C."/>
            <person name="Gorbacheva V.Y."/>
            <person name="Chernov M.V."/>
            <person name="Antoch M.P."/>
        </authorList>
    </citation>
    <scope>FUNCTION</scope>
    <scope>SUBCELLULAR LOCATION</scope>
</reference>
<reference key="15">
    <citation type="journal article" date="2006" name="J. Biol. Chem.">
        <title>The polycomb group protein EZH2 is required for mammalian circadian clock function.</title>
        <authorList>
            <person name="Etchegaray J.P."/>
            <person name="Yang X."/>
            <person name="DeBruyne J.P."/>
            <person name="Peters A.H."/>
            <person name="Weaver D.R."/>
            <person name="Jenuwein T."/>
            <person name="Reppert S.M."/>
        </authorList>
    </citation>
    <scope>INTERACTION WITH EZH2; CLOCK AND BMAL1</scope>
</reference>
<reference key="16">
    <citation type="journal article" date="2006" name="Mol. Cell. Biol.">
        <title>Functional evolution of the photolyase/cryptochrome protein family: importance of the C terminus of mammalian CRY1 for circadian core oscillator performance.</title>
        <authorList>
            <person name="Chaves I."/>
            <person name="Yagita K."/>
            <person name="Barnhoorn S."/>
            <person name="Okamura H."/>
            <person name="van der Horst G.T.J."/>
            <person name="Tamanini F."/>
        </authorList>
    </citation>
    <scope>FUNCTION</scope>
    <scope>INTERACTION WITH PER1 AND PER2</scope>
    <scope>SUBCELLULAR LOCATION</scope>
</reference>
<reference key="17">
    <citation type="journal article" date="2006" name="Proc. Natl. Acad. Sci. U.S.A.">
        <title>Posttranslational regulation of the mammalian circadian clock by cryptochrome and protein phosphatase 5.</title>
        <authorList>
            <person name="Partch C.L."/>
            <person name="Shields K.F."/>
            <person name="Thompson C.L."/>
            <person name="Selby C.P."/>
            <person name="Sancar A."/>
        </authorList>
    </citation>
    <scope>TISSUE SPECIFICITY</scope>
    <scope>INDUCTION</scope>
</reference>
<reference key="18">
    <citation type="journal article" date="2007" name="Cell">
        <title>Circadian mutant Overtime reveals F-box protein FBXL3 regulation of cryptochrome and period gene expression.</title>
        <authorList>
            <person name="Siepka S.M."/>
            <person name="Yoo S.H."/>
            <person name="Park J."/>
            <person name="Song W."/>
            <person name="Kumar V."/>
            <person name="Hu Y."/>
            <person name="Lee C."/>
            <person name="Takahashi J.S."/>
        </authorList>
    </citation>
    <scope>INTERACTION WITH FBXL3</scope>
    <scope>UBIQUITINATION</scope>
</reference>
<reference key="19">
    <citation type="journal article" date="2007" name="Nat. Cell Biol.">
        <title>CIPC is a mammalian circadian clock protein without invertebrate homologues.</title>
        <authorList>
            <person name="Zhao W.N."/>
            <person name="Malinin N."/>
            <person name="Yang F.C."/>
            <person name="Staknis D."/>
            <person name="Gekakis N."/>
            <person name="Maier B."/>
            <person name="Reischl S."/>
            <person name="Kramer A."/>
            <person name="Weitz C.J."/>
        </authorList>
    </citation>
    <scope>FUNCTION</scope>
</reference>
<reference key="20">
    <citation type="journal article" date="2008" name="PLoS ONE">
        <title>Implication of the F-Box Protein FBXL21 in circadian pacemaker function in mammals.</title>
        <authorList>
            <person name="Dardente H."/>
            <person name="Mendoza J."/>
            <person name="Fustin J.M."/>
            <person name="Challet E."/>
            <person name="Hazlerigg D.G."/>
        </authorList>
    </citation>
    <scope>INTERACTION WITH FBXL21</scope>
    <scope>UBIQUITINATION</scope>
</reference>
<reference key="21">
    <citation type="journal article" date="2009" name="Mol. Cell">
        <title>Rhythmic PER abundance defines a critical nodal point for negative feedback within the circadian clock mechanism.</title>
        <authorList>
            <person name="Chen R."/>
            <person name="Schirmer A."/>
            <person name="Lee Y."/>
            <person name="Lee H."/>
            <person name="Kumar V."/>
            <person name="Yoo S.H."/>
            <person name="Takahashi J.S."/>
            <person name="Lee C."/>
        </authorList>
    </citation>
    <scope>INTERACTION WITH BMAL1 AND CLOCK</scope>
    <scope>INDUCTION</scope>
</reference>
<reference key="22">
    <citation type="journal article" date="2009" name="Nucleic Acids Res.">
        <title>Molecular characterization of Mybbp1a as a co-repressor on the Period2 promoter.</title>
        <authorList>
            <person name="Hara Y."/>
            <person name="Onishi Y."/>
            <person name="Oishi K."/>
            <person name="Miyazaki K."/>
            <person name="Fukamizu A."/>
            <person name="Ishida N."/>
        </authorList>
    </citation>
    <scope>FUNCTION</scope>
    <scope>SUBCELLULAR LOCATION</scope>
    <scope>INTERACTION WITH MYBBP1A; DOCK7; HNRNPU; RPL7A; RPL8 AND RPS3</scope>
</reference>
<reference key="23">
    <citation type="journal article" date="2009" name="Science">
        <title>AMPK regulates the circadian clock by cryptochrome phosphorylation and degradation.</title>
        <authorList>
            <person name="Lamia K.A."/>
            <person name="Sachdeva U.M."/>
            <person name="DiTacchio L."/>
            <person name="Williams E.C."/>
            <person name="Alvarez J.G."/>
            <person name="Egan D.F."/>
            <person name="Vasquez D.S."/>
            <person name="Juguilon H."/>
            <person name="Panda S."/>
            <person name="Shaw R.J."/>
            <person name="Thompson C.B."/>
            <person name="Evans R.M."/>
        </authorList>
    </citation>
    <scope>PHOSPHORYLATION AT SER-71 AND SER-280</scope>
    <scope>MUTAGENESIS OF SER-71 AND SER-280</scope>
</reference>
<reference key="24">
    <citation type="journal article" date="2009" name="Science">
        <title>Circadian clock feedback cycle through NAMPT-mediated NAD+ biosynthesis.</title>
        <authorList>
            <person name="Ramsey K.M."/>
            <person name="Yoshino J."/>
            <person name="Brace C.S."/>
            <person name="Abrassart D."/>
            <person name="Kobayashi Y."/>
            <person name="Marcheva B."/>
            <person name="Hong H.K."/>
            <person name="Chong J.L."/>
            <person name="Buhr E.D."/>
            <person name="Lee C."/>
            <person name="Takahashi J.S."/>
            <person name="Imai S."/>
            <person name="Bass J."/>
        </authorList>
    </citation>
    <scope>FUNCTION</scope>
</reference>
<reference key="25">
    <citation type="journal article" date="2010" name="Genes Dev.">
        <title>The mammalian clock component PERIOD2 coordinates circadian output by interaction with nuclear receptors.</title>
        <authorList>
            <person name="Schmutz I."/>
            <person name="Ripperger J.A."/>
            <person name="Baeriswyl-Aebischer S."/>
            <person name="Albrecht U."/>
        </authorList>
    </citation>
    <scope>INTERACTION WITH PER2</scope>
</reference>
<reference key="26">
    <citation type="journal article" date="2010" name="Mol. Cell. Biol.">
        <title>Kruppel-like factor KLF10 is a link between the circadian clock and metabolism in liver.</title>
        <authorList>
            <person name="Guillaumond F."/>
            <person name="Grechez-Cassiau A."/>
            <person name="Subramaniam M."/>
            <person name="Brangolo S."/>
            <person name="Peteri-Brunback B."/>
            <person name="Staels B."/>
            <person name="Fievet C."/>
            <person name="Spelsberg T.C."/>
            <person name="Delaunay F."/>
            <person name="Teboul M."/>
        </authorList>
    </citation>
    <scope>FUNCTION</scope>
    <scope>INDUCTION</scope>
</reference>
<reference key="27">
    <citation type="journal article" date="2010" name="Nat. Med.">
        <title>Cryptochrome mediates circadian regulation of cAMP signaling and hepatic gluconeogenesis.</title>
        <authorList>
            <person name="Zhang E.E."/>
            <person name="Liu Y."/>
            <person name="Dentin R."/>
            <person name="Pongsawakul P.Y."/>
            <person name="Liu A.C."/>
            <person name="Hirota T."/>
            <person name="Nusinow D.A."/>
            <person name="Sun X."/>
            <person name="Landais S."/>
            <person name="Kodama Y."/>
            <person name="Brenner D.A."/>
            <person name="Montminy M."/>
            <person name="Kay S.A."/>
        </authorList>
    </citation>
    <scope>FUNCTION IN GLUCONEOGENESIS</scope>
    <scope>DISRUPTION PHENOTYPE</scope>
</reference>
<reference key="28">
    <citation type="journal article" date="2011" name="Cell">
        <title>Delay in feedback repression by cryptochrome 1 is required for circadian clock function.</title>
        <authorList>
            <person name="Ukai-Tadenuma M."/>
            <person name="Yamada R.G."/>
            <person name="Xu H."/>
            <person name="Ripperger J.A."/>
            <person name="Liu A.C."/>
            <person name="Ueda H.R."/>
        </authorList>
    </citation>
    <scope>FUNCTION IN CIRCADIAN RHYTHMS REGULATION</scope>
    <scope>INDUCTION</scope>
</reference>
<reference key="29">
    <citation type="journal article" date="2011" name="J. Biol. Chem.">
        <title>Biochemical analysis of the canonical model for the mammalian circadian clock.</title>
        <authorList>
            <person name="Ye R."/>
            <person name="Selby C.P."/>
            <person name="Ozturk N."/>
            <person name="Annayev Y."/>
            <person name="Sancar A."/>
        </authorList>
    </citation>
    <scope>INTERACTION WITH CLOCK-BMAL1 AND PER2</scope>
</reference>
<reference key="30">
    <citation type="journal article" date="2011" name="J. Biol. Chem.">
        <title>cAMP-response element (CRE)-mediated transcription by activating transcription factor-4 (ATF4) is essential for circadian expression of the Period2 gene.</title>
        <authorList>
            <person name="Koyanagi S."/>
            <person name="Hamdan A.M."/>
            <person name="Horiguchi M."/>
            <person name="Kusunose N."/>
            <person name="Okamoto A."/>
            <person name="Matsunaga N."/>
            <person name="Ohdo S."/>
        </authorList>
    </citation>
    <scope>FUNCTION</scope>
</reference>
<reference key="31">
    <citation type="journal article" date="2011" name="Nature">
        <title>Cryptochromes mediate rhythmic repression of the glucocorticoid receptor.</title>
        <authorList>
            <person name="Lamia K.A."/>
            <person name="Papp S.J."/>
            <person name="Yu R.T."/>
            <person name="Barish G.D."/>
            <person name="Uhlenhaut N.H."/>
            <person name="Jonker J.W."/>
            <person name="Downes M."/>
            <person name="Evans R.M."/>
        </authorList>
    </citation>
    <scope>FUNCTION AS NR3C1 REPRESSOR</scope>
    <scope>INTERACTION WITH AR; NR1D1; NR3C1; RORA AND RORC</scope>
    <scope>DISRUPTION PHENOTYPE</scope>
</reference>
<reference key="32">
    <citation type="journal article" date="2012" name="PLoS ONE">
        <title>Role of type II protein arginine methyltransferase 5 in the regulation of Circadian Per1 gene.</title>
        <authorList>
            <person name="Na J."/>
            <person name="Lee K."/>
            <person name="Kim H.G."/>
            <person name="Shin J.Y."/>
            <person name="Na W."/>
            <person name="Jeong H."/>
            <person name="Lee J.W."/>
            <person name="Cho S."/>
            <person name="Kim W.S."/>
            <person name="Ju B.G."/>
        </authorList>
    </citation>
    <scope>FUNCTION</scope>
    <scope>INDUCTION</scope>
    <scope>INTERACTION WITH PRMT5</scope>
</reference>
<reference key="33">
    <citation type="journal article" date="2012" name="Science">
        <title>Identification of small molecule activators of cryptochrome.</title>
        <authorList>
            <person name="Hirota T."/>
            <person name="Lee J.W."/>
            <person name="St John P.C."/>
            <person name="Sawa M."/>
            <person name="Iwaisako K."/>
            <person name="Noguchi T."/>
            <person name="Pongsawakul P.Y."/>
            <person name="Sonntag T."/>
            <person name="Welsh D.K."/>
            <person name="Brenner D.A."/>
            <person name="Doyle F.J. III"/>
            <person name="Schultz P.G."/>
            <person name="Kay S.A."/>
        </authorList>
    </citation>
    <scope>ACTIVITY REGULATION</scope>
</reference>
<reference key="34">
    <citation type="journal article" date="2013" name="Am. J. Physiol.">
        <title>High-fat diet-induced hyperinsulinemia and tissue-specific insulin resistance in Cry-deficient mice.</title>
        <authorList>
            <person name="Barclay J.L."/>
            <person name="Shostak A."/>
            <person name="Leliavski A."/>
            <person name="Tsang A.H."/>
            <person name="Johren O."/>
            <person name="Muller-Fielitz H."/>
            <person name="Landgraf D."/>
            <person name="Naujokat N."/>
            <person name="van der Horst G.T."/>
            <person name="Oster H."/>
        </authorList>
    </citation>
    <scope>FUNCTION IN METABOLISM</scope>
    <scope>DISRUPTION PHENOTYPE</scope>
</reference>
<reference key="35">
    <citation type="journal article" date="2013" name="Cell">
        <title>Competing E3 ubiquitin ligases govern circadian periodicity by degradation of CRY in nucleus and cytoplasm.</title>
        <authorList>
            <person name="Yoo S.H."/>
            <person name="Mohawk J.A."/>
            <person name="Siepka S.M."/>
            <person name="Shan Y."/>
            <person name="Huh S.K."/>
            <person name="Hong H.K."/>
            <person name="Kornblum I."/>
            <person name="Kumar V."/>
            <person name="Koike N."/>
            <person name="Xu M."/>
            <person name="Nussbaum J."/>
            <person name="Liu X."/>
            <person name="Chen Z."/>
            <person name="Chen Z.J."/>
            <person name="Green C.B."/>
            <person name="Takahashi J.S."/>
        </authorList>
    </citation>
    <scope>UBIQUITINATION BY THE SCF(FBXL3) AND SCF(FBXL21) COMPLEXES</scope>
    <scope>INTERACTION WITH FBXL3 AND FBXL21</scope>
    <scope>UBIQUITINATION AT LYS-11</scope>
</reference>
<reference key="36">
    <citation type="journal article" date="2013" name="Cell">
        <title>FBXL21 regulates oscillation of the circadian clock through ubiquitination and stabilization of cryptochromes.</title>
        <authorList>
            <person name="Hirano A."/>
            <person name="Yumimoto K."/>
            <person name="Tsunematsu R."/>
            <person name="Matsumoto M."/>
            <person name="Oyama M."/>
            <person name="Kozuka-Hata H."/>
            <person name="Nakagawa T."/>
            <person name="Lanjakornsiripan D."/>
            <person name="Nakayama K.I."/>
            <person name="Fukada Y."/>
        </authorList>
    </citation>
    <scope>UBIQUITINATION BY THE SCF(FBXL3) AND SCF(FBXL21) COMPLEXES</scope>
    <scope>UBIQUITINATION AT LYS-107; LYS-159; LYS-329 AND LYS-485</scope>
    <scope>INTERACTION WITH FBXL3 AND FBXL21</scope>
    <scope>MUTAGENESIS OF LYS-107</scope>
</reference>
<reference key="37">
    <citation type="journal article" date="2013" name="J. Biol. Chem.">
        <title>Phosphorylation of the cryptochrome 1 C-terminal tail regulates circadian period length.</title>
        <authorList>
            <person name="Gao P."/>
            <person name="Yoo S.H."/>
            <person name="Lee K.J."/>
            <person name="Rosensweig C."/>
            <person name="Takahashi J.S."/>
            <person name="Chen B.P."/>
            <person name="Green C.B."/>
        </authorList>
    </citation>
    <scope>FUNCTION IN CIRCADIAN CLOCK</scope>
    <scope>INTERACTION WITH PRKDC</scope>
    <scope>PHOSPHORYLATION AT SER-588</scope>
    <scope>MUTAGENESIS OF SER-551; SER-564 AND SER-588</scope>
</reference>
<reference key="38">
    <citation type="journal article" date="2013" name="J. Neurosci.">
        <title>Distinct and separable roles for endogenous CRY1 and CRY2 within the circadian molecular clockwork of the suprachiasmatic nucleus, as revealed by the Fbxl3(Afh) mutation.</title>
        <authorList>
            <person name="Anand S.N."/>
            <person name="Maywood E.S."/>
            <person name="Chesham J.E."/>
            <person name="Joynson G."/>
            <person name="Banks G.T."/>
            <person name="Hastings M.H."/>
            <person name="Nolan P.M."/>
        </authorList>
    </citation>
    <scope>FUNCTION IN CIRCADIAN CLOCK</scope>
    <scope>DISRUPTION PHENOTYPE</scope>
</reference>
<reference key="39">
    <citation type="journal article" date="2013" name="Nat. Commun.">
        <title>Cryptochromes are critical for the development of coherent circadian rhythms in the mouse suprachiasmatic nucleus.</title>
        <authorList>
            <person name="Ono D."/>
            <person name="Honma S."/>
            <person name="Honma K."/>
        </authorList>
    </citation>
    <scope>FUNCTION IN CIRCADIAN CLOCK</scope>
</reference>
<reference key="40">
    <citation type="journal article" date="2013" name="Nat. Commun.">
        <title>Metastasis-associated protein 1 is an integral component of the circadian molecular machinery.</title>
        <authorList>
            <person name="Li D.Q."/>
            <person name="Pakala S.B."/>
            <person name="Reddy S.D."/>
            <person name="Peng S."/>
            <person name="Balasenthil S."/>
            <person name="Deng C.X."/>
            <person name="Lee C.C."/>
            <person name="Rea M.A."/>
            <person name="Kumar R."/>
        </authorList>
    </citation>
    <scope>FUNCTION</scope>
</reference>
<reference key="41">
    <citation type="journal article" date="2013" name="PLoS ONE">
        <title>Mammalian TIMELESS is involved in period determination and DNA damage-dependent phase advancing of the circadian clock.</title>
        <authorList>
            <person name="Engelen E."/>
            <person name="Janssens R.C."/>
            <person name="Yagita K."/>
            <person name="Smits V.A."/>
            <person name="van der Horst G.T."/>
            <person name="Tamanini F."/>
        </authorList>
    </citation>
    <scope>INTERACTION WITH TIMELESS AND PER2</scope>
    <scope>SUBCELLULAR LOCATION</scope>
</reference>
<reference key="42">
    <citation type="journal article" date="2013" name="Physiol. Rev.">
        <title>Metabolism and the circadian clock converge.</title>
        <authorList>
            <person name="Eckel-Mahan K."/>
            <person name="Sassone-Corsi P."/>
        </authorList>
    </citation>
    <scope>REVIEW</scope>
</reference>
<reference key="43">
    <citation type="journal article" date="2014" name="J. Biol. Chem.">
        <title>Gene model 129 (Gm129) encodes a novel transcriptional repressor that modulates circadian gene expression.</title>
        <authorList>
            <person name="Annayev Y."/>
            <person name="Adar S."/>
            <person name="Chiou Y.Y."/>
            <person name="Lieb J."/>
            <person name="Sancar A."/>
            <person name="Ye R."/>
        </authorList>
    </citation>
    <scope>FUNCTION</scope>
    <scope>DISRUPTION PHENOTYPE</scope>
</reference>
<reference key="44">
    <citation type="journal article" date="2014" name="Mol. Cell. Endocrinol.">
        <title>Modulation of glucocorticoid receptor induction properties by core circadian clock proteins.</title>
        <authorList>
            <person name="Han D.H."/>
            <person name="Lee Y.J."/>
            <person name="Kim K."/>
            <person name="Kim C.J."/>
            <person name="Cho S."/>
        </authorList>
    </citation>
    <scope>FUNCTION IN GR REPRESSION</scope>
</reference>
<reference key="45">
    <citation type="journal article" date="2014" name="Nucleic Acids Res.">
        <title>Modulation of ATR-mediated DNA damage checkpoint response by cryptochrome 1.</title>
        <authorList>
            <person name="Kang T.H."/>
            <person name="Leem S.H."/>
        </authorList>
    </citation>
    <scope>FUNCTION IN DNA DAMAGE CHECKPOINT</scope>
    <scope>INTERACTION WITH TIMELESS</scope>
    <scope>SUBCELLULAR LOCATION</scope>
</reference>
<reference key="46">
    <citation type="journal article" date="2014" name="Trends Cell Biol.">
        <title>Molecular architecture of the mammalian circadian clock.</title>
        <authorList>
            <person name="Partch C.L."/>
            <person name="Green C.B."/>
            <person name="Takahashi J.S."/>
        </authorList>
    </citation>
    <scope>REVIEW</scope>
</reference>
<reference key="47">
    <citation type="journal article" date="2015" name="PLoS ONE">
        <title>CUL4-DDB1-CDT2 E3 ligase regulates the molecular clock activity by promoting ubiquitination-dependent degradation of the mammalian CRY1.</title>
        <authorList>
            <person name="Tong X."/>
            <person name="Zhang D."/>
            <person name="Guha A."/>
            <person name="Arthurs B."/>
            <person name="Cazares V."/>
            <person name="Gupta N."/>
            <person name="Yin L."/>
        </authorList>
    </citation>
    <scope>FUNCTION</scope>
    <scope>INTERACTION WITH DDB1-CUL4A COMPLEX</scope>
    <scope>UBIQUITINATION AT LYS-585</scope>
    <scope>MUTAGENESIS OF LYS-585</scope>
</reference>
<reference key="48">
    <citation type="journal article" date="2016" name="Cell Rep.">
        <title>Distinct roles of HDAC3 in the core circadian negative feedback loop are critical for clock function.</title>
        <authorList>
            <person name="Shi G."/>
            <person name="Xie P."/>
            <person name="Qu Z."/>
            <person name="Zhang Z."/>
            <person name="Dong Z."/>
            <person name="An Y."/>
            <person name="Xing L."/>
            <person name="Liu Z."/>
            <person name="Dong Y."/>
            <person name="Xu G."/>
            <person name="Yang L."/>
            <person name="Liu Y."/>
            <person name="Xu Y."/>
        </authorList>
    </citation>
    <scope>UBIQUITINATION AND PROTEASOMAL DEGRADATION</scope>
    <scope>INTERACTION WITH HDAC3 AND BMAL1</scope>
</reference>
<reference key="49">
    <citation type="journal article" date="2016" name="PLoS ONE">
        <title>USP7 and TDP-43: pleiotropic regulation of cryptochrome protein stability paces the oscillation of the mammalian circadian clock.</title>
        <authorList>
            <person name="Hirano A."/>
            <person name="Nakagawa T."/>
            <person name="Yoshitane H."/>
            <person name="Oyama M."/>
            <person name="Kozuka-Hata H."/>
            <person name="Lanjakornsiripan D."/>
            <person name="Fukada Y."/>
        </authorList>
    </citation>
    <scope>DEUBIQUITINATION BY USP7</scope>
    <scope>INTERACTION WITH TRIM28; KCTD5 AND DDB1</scope>
</reference>
<reference key="50">
    <citation type="journal article" date="2017" name="Cell Metab.">
        <title>CRY1/2 selectively repress PPARdelta and limit exercise capacity.</title>
        <authorList>
            <person name="Jordan S.D."/>
            <person name="Kriebs A."/>
            <person name="Vaughan M."/>
            <person name="Duglan D."/>
            <person name="Fan W."/>
            <person name="Henriksson E."/>
            <person name="Huber A.L."/>
            <person name="Papp S.J."/>
            <person name="Nguyen M."/>
            <person name="Afetian M."/>
            <person name="Downes M."/>
            <person name="Yu R.T."/>
            <person name="Kralli A."/>
            <person name="Evans R.M."/>
            <person name="Lamia K.A."/>
        </authorList>
    </citation>
    <scope>FUNCTION</scope>
    <scope>DISRUPTION PHENOTYPE</scope>
    <scope>INTERACTION WITH PPARA; PPARD AND PPARG</scope>
</reference>
<reference key="51">
    <citation type="journal article" date="2017" name="Diabetes">
        <title>DDB1-mediated CRY1 degradation promotes FOXO1-driven gluconeogenesis in liver.</title>
        <authorList>
            <person name="Tong X."/>
            <person name="Zhang D."/>
            <person name="Charney N."/>
            <person name="Jin E."/>
            <person name="VanDommelen K."/>
            <person name="Stamper K."/>
            <person name="Gupta N."/>
            <person name="Saldate J."/>
            <person name="Yin L."/>
        </authorList>
    </citation>
    <scope>FUNCTION</scope>
    <scope>INTERACTION WITH FOXO1</scope>
</reference>
<reference key="52">
    <citation type="journal article" date="2017" name="Proc. Natl. Acad. Sci. U.S.A.">
        <title>Circadian repressors CRY1 and CRY2 broadly interact with nuclear receptors and modulate transcriptional activity.</title>
        <authorList>
            <person name="Kriebs A."/>
            <person name="Jordan S.D."/>
            <person name="Soto E."/>
            <person name="Henriksson E."/>
            <person name="Sandate C.R."/>
            <person name="Vaughan M.E."/>
            <person name="Chan A.B."/>
            <person name="Duglan D."/>
            <person name="Papp S.J."/>
            <person name="Huber A.L."/>
            <person name="Afetian M.E."/>
            <person name="Yu R.T."/>
            <person name="Zhao X."/>
            <person name="Downes M."/>
            <person name="Evans R.M."/>
            <person name="Lamia K.A."/>
        </authorList>
    </citation>
    <scope>FUNCTION</scope>
    <scope>INTERACTION WITH NR1I2; NR1I3; NR3C1; PPARD; VDR; AR AND HNF4A</scope>
</reference>
<reference key="53">
    <citation type="journal article" date="2018" name="FASEB J.">
        <title>Differential roles for cryptochromes in the mammalian retinal clock.</title>
        <authorList>
            <person name="Wong J.C.Y."/>
            <person name="Smyllie N.J."/>
            <person name="Banks G.T."/>
            <person name="Pothecary C.A."/>
            <person name="Barnard A.R."/>
            <person name="Maywood E.S."/>
            <person name="Jagannath A."/>
            <person name="Hughes S."/>
            <person name="van der Horst G.T.J."/>
            <person name="MacLaren R.E."/>
            <person name="Hankins M.W."/>
            <person name="Hastings M.H."/>
            <person name="Nolan P.M."/>
            <person name="Foster R.G."/>
            <person name="Peirson S.N."/>
        </authorList>
    </citation>
    <scope>FUNCTION</scope>
    <scope>DISRUPTION PHENOTYPE</scope>
    <scope>TISSUE SPECIFICITY</scope>
</reference>
<reference key="54">
    <citation type="journal article" date="2018" name="PLoS Biol.">
        <title>JMJD5 links CRY1 function and proteasomal degradation.</title>
        <authorList>
            <person name="Saran A.R."/>
            <person name="Kalinowska D."/>
            <person name="Oh S."/>
            <person name="Janknecht R."/>
            <person name="DiTacchio L."/>
        </authorList>
    </citation>
    <scope>INTERACTION WITH KDM8; FBXL3 AND PSMD2</scope>
</reference>
<reference key="55">
    <citation type="journal article" date="2018" name="Cell Metab.">
        <title>Autophagy regulates the liver clock and glucose metabolism by degrading CRY1.</title>
        <authorList>
            <person name="Toledo M."/>
            <person name="Batista-Gonzalez A."/>
            <person name="Merheb E."/>
            <person name="Aoun M.L."/>
            <person name="Tarabra E."/>
            <person name="Feng D."/>
            <person name="Sarparanta J."/>
            <person name="Merlo P."/>
            <person name="Botre F."/>
            <person name="Schwartz G.J."/>
            <person name="Pessin J.E."/>
            <person name="Singh R."/>
        </authorList>
    </citation>
    <scope>FUNCTION</scope>
    <scope>INTERACTION WITH MAP1LC3B</scope>
    <scope>LIR MOTIFS</scope>
    <scope>DEGRADATION VIA AUTOPHAGY</scope>
    <scope>MUTAGENESIS OF TYR-273; VAL-276; TYR-287; LEU-290; TYR-488; LEU-491; TYR-494 AND LEU-497</scope>
</reference>
<reference key="56">
    <citation type="journal article" date="2013" name="Cell">
        <title>Structures of Drosophila cryptochrome and mouse cryptochrome1 provide insight into circadian function.</title>
        <authorList>
            <person name="Czarna A."/>
            <person name="Berndt A."/>
            <person name="Singh H.R."/>
            <person name="Grudziecki A."/>
            <person name="Ladurner A.G."/>
            <person name="Timinszky G."/>
            <person name="Kramer A."/>
            <person name="Wolf E."/>
        </authorList>
    </citation>
    <scope>X-RAY CRYSTALLOGRAPHY (2.65 ANGSTROMS) OF APOPROTEIN</scope>
    <scope>INTERACTION WITH BMAL1; PER2 AND FBXL3</scope>
    <scope>FUNCTION</scope>
    <scope>FAD-BINDING SITES</scope>
    <scope>MUTAGENESIS OF HIS-224; SER-247; 382-GLU-GLU-383; PHE-405 AND LYS-485</scope>
</reference>